<comment type="function">
    <text evidence="1 3 6 9 10 12 16 21 25 32 33 34 37">Lysosomal ceramidase that hydrolyzes sphingolipid ceramides into sphingosine and free fatty acids at acidic pH (PubMed:10610716, PubMed:11451951, PubMed:15655246, PubMed:26898341, PubMed:36752535, PubMed:7744740, PubMed:7852294). Ceramides, sphingosine, and its phosphorylated form sphingosine-1-phosphate are bioactive lipids that mediate cellular signaling pathways regulating several biological processes including cell proliferation, apoptosis and differentiation (PubMed:10610716). Has a higher catalytic efficiency towards C12-ceramides versus other ceramides (PubMed:15655246, PubMed:7744740). Also catalyzes the reverse reaction allowing the synthesis of ceramides from fatty acids and sphingosine (PubMed:12764132, PubMed:12815059). For the reverse synthetic reaction, the natural sphingosine D-erythro isomer is more efficiently utilized as a substrate compared to D-erythro-dihydrosphingosine and D-erythro-phytosphingosine, while the fatty acids with chain lengths of 12 or 14 carbons are the most efficiently used (PubMed:12764132). Also has an N-acylethanolamine hydrolase activity (PubMed:15655246). By regulating the levels of ceramides, sphingosine and sphingosine-1-phosphate in the epidermis, mediates the calcium-induced differentiation of epidermal keratinocytes (PubMed:17713573). Also indirectly regulates tumor necrosis factor/TNF-induced apoptosis (By similarity). By regulating the intracellular balance between ceramides and sphingosine, in adrenocortical cells, probably also acts as a regulator of steroidogenesis (PubMed:22261821).</text>
</comment>
<comment type="function">
    <molecule>Isoform 2</molecule>
    <text evidence="49">May directly regulate steroidogenesis by binding the nuclear receptor NR5A1 and negatively regulating its transcriptional activity.</text>
</comment>
<comment type="catalytic activity">
    <reaction evidence="3 6 7 10 12 22 27 29 33 35">
        <text>an N-acylsphing-4-enine + H2O = sphing-4-enine + a fatty acid</text>
        <dbReference type="Rhea" id="RHEA:20856"/>
        <dbReference type="ChEBI" id="CHEBI:15377"/>
        <dbReference type="ChEBI" id="CHEBI:28868"/>
        <dbReference type="ChEBI" id="CHEBI:52639"/>
        <dbReference type="ChEBI" id="CHEBI:57756"/>
        <dbReference type="EC" id="3.5.1.23"/>
    </reaction>
</comment>
<comment type="catalytic activity">
    <reaction evidence="25 34">
        <text>a beta-D-glucosyl-(1&lt;-&gt;1')-N-acylsphing-4-enine + H2O = beta-D-glucosyl-(1&lt;-&gt;1)-sphing-4-enine + a fatty acid</text>
        <dbReference type="Rhea" id="RHEA:30915"/>
        <dbReference type="ChEBI" id="CHEBI:15377"/>
        <dbReference type="ChEBI" id="CHEBI:22801"/>
        <dbReference type="ChEBI" id="CHEBI:28868"/>
        <dbReference type="ChEBI" id="CHEBI:83992"/>
        <dbReference type="EC" id="3.5.1.109"/>
    </reaction>
    <physiologicalReaction direction="left-to-right" evidence="25 34">
        <dbReference type="Rhea" id="RHEA:30916"/>
    </physiologicalReaction>
</comment>
<comment type="catalytic activity">
    <reaction evidence="25">
        <text>a globoside Gb3Cer + H2O = a lysoGb3 + a fatty acid</text>
        <dbReference type="Rhea" id="RHEA:78451"/>
        <dbReference type="ChEBI" id="CHEBI:15377"/>
        <dbReference type="ChEBI" id="CHEBI:28868"/>
        <dbReference type="ChEBI" id="CHEBI:88154"/>
        <dbReference type="ChEBI" id="CHEBI:228803"/>
    </reaction>
    <physiologicalReaction direction="left-to-right" evidence="25">
        <dbReference type="Rhea" id="RHEA:78452"/>
    </physiologicalReaction>
</comment>
<comment type="catalytic activity">
    <reaction evidence="25">
        <text>a globoside Gb3Cer (d18:1(4E)) + H2O = a lysoGb3(d18:1(4E)) + a fatty acid</text>
        <dbReference type="Rhea" id="RHEA:78447"/>
        <dbReference type="ChEBI" id="CHEBI:15377"/>
        <dbReference type="ChEBI" id="CHEBI:18313"/>
        <dbReference type="ChEBI" id="CHEBI:28868"/>
        <dbReference type="ChEBI" id="CHEBI:228802"/>
    </reaction>
    <physiologicalReaction direction="left-to-right" evidence="25">
        <dbReference type="Rhea" id="RHEA:78448"/>
    </physiologicalReaction>
</comment>
<comment type="catalytic activity">
    <reaction evidence="6 9 10 12 29 33">
        <text>N-dodecanoylsphing-4-enine + H2O = dodecanoate + sphing-4-enine</text>
        <dbReference type="Rhea" id="RHEA:41291"/>
        <dbReference type="ChEBI" id="CHEBI:15377"/>
        <dbReference type="ChEBI" id="CHEBI:18262"/>
        <dbReference type="ChEBI" id="CHEBI:57756"/>
        <dbReference type="ChEBI" id="CHEBI:72956"/>
    </reaction>
    <physiologicalReaction direction="left-to-right" evidence="33 45 47 48">
        <dbReference type="Rhea" id="RHEA:41292"/>
    </physiologicalReaction>
    <physiologicalReaction direction="right-to-left" evidence="9 47">
        <dbReference type="Rhea" id="RHEA:41293"/>
    </physiologicalReaction>
</comment>
<comment type="catalytic activity">
    <reaction evidence="9">
        <text>N-tetradecanoylsphing-4-enine + H2O = tetradecanoate + sphing-4-enine</text>
        <dbReference type="Rhea" id="RHEA:41287"/>
        <dbReference type="ChEBI" id="CHEBI:15377"/>
        <dbReference type="ChEBI" id="CHEBI:30807"/>
        <dbReference type="ChEBI" id="CHEBI:57756"/>
        <dbReference type="ChEBI" id="CHEBI:72957"/>
    </reaction>
    <physiologicalReaction direction="right-to-left" evidence="46">
        <dbReference type="Rhea" id="RHEA:41289"/>
    </physiologicalReaction>
</comment>
<comment type="catalytic activity">
    <reaction evidence="9 12">
        <text>N-hexadecanoylsphing-4-enine + H2O = sphing-4-enine + hexadecanoate</text>
        <dbReference type="Rhea" id="RHEA:38891"/>
        <dbReference type="ChEBI" id="CHEBI:7896"/>
        <dbReference type="ChEBI" id="CHEBI:15377"/>
        <dbReference type="ChEBI" id="CHEBI:57756"/>
        <dbReference type="ChEBI" id="CHEBI:72959"/>
    </reaction>
    <physiologicalReaction direction="left-to-right" evidence="48">
        <dbReference type="Rhea" id="RHEA:38892"/>
    </physiologicalReaction>
    <physiologicalReaction direction="right-to-left" evidence="46">
        <dbReference type="Rhea" id="RHEA:38893"/>
    </physiologicalReaction>
</comment>
<comment type="catalytic activity">
    <reaction evidence="9 33">
        <text>N-octadecanoylsphing-4-enine + H2O = sphing-4-enine + octadecanoate</text>
        <dbReference type="Rhea" id="RHEA:41279"/>
        <dbReference type="ChEBI" id="CHEBI:15377"/>
        <dbReference type="ChEBI" id="CHEBI:25629"/>
        <dbReference type="ChEBI" id="CHEBI:57756"/>
        <dbReference type="ChEBI" id="CHEBI:72961"/>
    </reaction>
    <physiologicalReaction direction="left-to-right" evidence="51">
        <dbReference type="Rhea" id="RHEA:41280"/>
    </physiologicalReaction>
    <physiologicalReaction direction="right-to-left" evidence="46">
        <dbReference type="Rhea" id="RHEA:41281"/>
    </physiologicalReaction>
</comment>
<comment type="catalytic activity">
    <reaction evidence="9">
        <text>N-dodecanoyl-(4R)-hydroxysphinganine + H2O = (4R)-hydroxysphinganine + dodecanoate</text>
        <dbReference type="Rhea" id="RHEA:41303"/>
        <dbReference type="ChEBI" id="CHEBI:15377"/>
        <dbReference type="ChEBI" id="CHEBI:18262"/>
        <dbReference type="ChEBI" id="CHEBI:64124"/>
        <dbReference type="ChEBI" id="CHEBI:78001"/>
    </reaction>
    <physiologicalReaction direction="right-to-left" evidence="46">
        <dbReference type="Rhea" id="RHEA:41305"/>
    </physiologicalReaction>
</comment>
<comment type="catalytic activity">
    <reaction evidence="9">
        <text>N-(dodecanoyl)-sphinganine + H2O = dodecanoate + sphinganine</text>
        <dbReference type="Rhea" id="RHEA:45448"/>
        <dbReference type="ChEBI" id="CHEBI:15377"/>
        <dbReference type="ChEBI" id="CHEBI:18262"/>
        <dbReference type="ChEBI" id="CHEBI:57817"/>
        <dbReference type="ChEBI" id="CHEBI:85261"/>
    </reaction>
    <physiologicalReaction direction="right-to-left" evidence="46">
        <dbReference type="Rhea" id="RHEA:45450"/>
    </physiologicalReaction>
</comment>
<comment type="catalytic activity">
    <reaction evidence="33">
        <text>N-(acetyl)-sphing-4-enine + H2O = sphing-4-enine + acetate</text>
        <dbReference type="Rhea" id="RHEA:58484"/>
        <dbReference type="ChEBI" id="CHEBI:15377"/>
        <dbReference type="ChEBI" id="CHEBI:30089"/>
        <dbReference type="ChEBI" id="CHEBI:46979"/>
        <dbReference type="ChEBI" id="CHEBI:57756"/>
    </reaction>
</comment>
<comment type="catalytic activity">
    <reaction evidence="33">
        <text>N-(hexanoyl)sphing-4-enine + H2O = hexanoate + sphing-4-enine</text>
        <dbReference type="Rhea" id="RHEA:41295"/>
        <dbReference type="ChEBI" id="CHEBI:15377"/>
        <dbReference type="ChEBI" id="CHEBI:17120"/>
        <dbReference type="ChEBI" id="CHEBI:57756"/>
        <dbReference type="ChEBI" id="CHEBI:63867"/>
    </reaction>
    <physiologicalReaction direction="left-to-right" evidence="51">
        <dbReference type="Rhea" id="RHEA:41296"/>
    </physiologicalReaction>
</comment>
<comment type="catalytic activity">
    <reaction evidence="33">
        <text>N-octanoylsphing-4-enine + H2O = octanoate + sphing-4-enine</text>
        <dbReference type="Rhea" id="RHEA:45092"/>
        <dbReference type="ChEBI" id="CHEBI:15377"/>
        <dbReference type="ChEBI" id="CHEBI:25646"/>
        <dbReference type="ChEBI" id="CHEBI:45815"/>
        <dbReference type="ChEBI" id="CHEBI:57756"/>
    </reaction>
    <physiologicalReaction direction="left-to-right" evidence="51">
        <dbReference type="Rhea" id="RHEA:45093"/>
    </physiologicalReaction>
</comment>
<comment type="catalytic activity">
    <reaction evidence="33">
        <text>N-(9Z-octadecenoyl)-sphing-4-enine + H2O = sphing-4-enine + (9Z)-octadecenoate</text>
        <dbReference type="Rhea" id="RHEA:41299"/>
        <dbReference type="ChEBI" id="CHEBI:15377"/>
        <dbReference type="ChEBI" id="CHEBI:30823"/>
        <dbReference type="ChEBI" id="CHEBI:57756"/>
        <dbReference type="ChEBI" id="CHEBI:77996"/>
    </reaction>
    <physiologicalReaction direction="left-to-right" evidence="51">
        <dbReference type="Rhea" id="RHEA:41300"/>
    </physiologicalReaction>
</comment>
<comment type="catalytic activity">
    <reaction evidence="12">
        <text>N-dodecanoylethanolamine + H2O = dodecanoate + ethanolamine</text>
        <dbReference type="Rhea" id="RHEA:45456"/>
        <dbReference type="ChEBI" id="CHEBI:15377"/>
        <dbReference type="ChEBI" id="CHEBI:18262"/>
        <dbReference type="ChEBI" id="CHEBI:57603"/>
        <dbReference type="ChEBI" id="CHEBI:85263"/>
    </reaction>
    <physiologicalReaction direction="left-to-right" evidence="48">
        <dbReference type="Rhea" id="RHEA:45457"/>
    </physiologicalReaction>
</comment>
<comment type="activity regulation">
    <text evidence="9">Activated by Ca(2+), Mg(2+) and Na(+) cations (PubMed:12764132). Inhibited by Zn(2+) (PubMed:12764132). Phosphatidylserine and phosphatidic acid stimulate while cardiolipin, phosphatidylcholine, lysophosphatidylcholine, phosphatidylethanolamine, phosphatidylinositol and sphingomyelin inhibit the reverse ceramide synthase activity (PubMed:12764132). Phosphatidic acid, phosphatidylinositol and C16-ceramide inhibit the ceramidase/hydrolase activity (PubMed:12764132).</text>
</comment>
<comment type="biophysicochemical properties">
    <kinetics>
        <KM evidence="33">149 uM for N-dodecanoylsphing-4-enine (at 37 degrees Celsius and pH 4.2)</KM>
        <KM evidence="10">389 uM for N-dodecanoylsphing-4-enine (at 37 degrees Celsius and pH 4.5)</KM>
        <KM evidence="9">24 uM for sphingosine (at 37 degrees Celsius and pH 6.0)</KM>
        <KM evidence="9">74 uM for dodecanoate (at 37 degrees Celsius and pH 6.0)</KM>
        <KM evidence="12">55 uM for N-dodecanoylethanolamine (at 37 degrees Celsius and pH 4.5)</KM>
        <Vmax evidence="33">136.0 nmol/h/mg enzyme for the hydrolysis of N-dodecanoylsphing-4-enine (at 37 degrees Celsius and pH 4.2)</Vmax>
        <Vmax evidence="10">28.0 nmol/h/mg enzyme for the hydrolysis of N-dodecanoylsphing-4-enine (at 37 degrees Celsius and pH 4.5)</Vmax>
        <Vmax evidence="9">208.0 pmol/h/ug enzyme toward sphingosine for the synthesis of N-dodecanoylsphing-4-enine (at 37 degrees Celsius and pH 6.0)</Vmax>
        <Vmax evidence="9">233.0 pmol/h/ug enzyme toward dodecanoate for the synthesis of N-dodecanoylsphing-4-enine (at 37 degrees Celsius and pH 6.0)</Vmax>
    </kinetics>
    <phDependence>
        <text evidence="10 33">Optimum pH is 3.8-5.0 for the hydrolysis of N-dodecanoylsphing-4-enine (PubMed:12815059, PubMed:7744740). Optimum pH is 5.5-6.5 for the synthesis of N-dodecanoylsphing-4-enine (PubMed:12815059).</text>
    </phDependence>
</comment>
<comment type="pathway">
    <text evidence="3 33">Lipid metabolism; sphingolipid metabolism.</text>
</comment>
<comment type="subunit">
    <text evidence="6 29 30 33 49">Heterodimer; disulfide-linked (PubMed:11451951, PubMed:29692406, PubMed:30525581, PubMed:7744740). The heterodimer is composed of the disulfide-linked alpha and beta chains produced by autocatalytic cleavage of the precursor (PubMed:11451951, PubMed:29692406, PubMed:30525581, PubMed:7744740). Isoform 2: May interact with NR5A1 in the nucleus; the direct interaction would negatively regulate NR5A1 transcriptional activity (Probable).</text>
</comment>
<comment type="interaction">
    <interactant intactId="EBI-714581">
        <id>Q13510</id>
    </interactant>
    <interactant intactId="EBI-874629">
        <id>Q13285</id>
        <label>NR5A1</label>
    </interactant>
    <organismsDiffer>false</organismsDiffer>
    <experiments>4</experiments>
</comment>
<comment type="interaction">
    <interactant intactId="EBI-21572613">
        <id>Q13510-2</id>
    </interactant>
    <interactant intactId="EBI-874629">
        <id>Q13285</id>
        <label>NR5A1</label>
    </interactant>
    <organismsDiffer>false</organismsDiffer>
    <experiments>3</experiments>
</comment>
<comment type="interaction">
    <interactant intactId="EBI-25917771">
        <id>Q13510-3</id>
    </interactant>
    <interactant intactId="EBI-11282723">
        <id>Q9Y5Z0</id>
        <label>BACE2</label>
    </interactant>
    <organismsDiffer>false</organismsDiffer>
    <experiments>3</experiments>
</comment>
<comment type="subcellular location">
    <subcellularLocation>
        <location evidence="9">Lysosome</location>
    </subcellularLocation>
    <subcellularLocation>
        <location evidence="33">Secreted</location>
    </subcellularLocation>
    <text evidence="6">Secretion is extremely low and localization to lysosomes is mannose-6-phosphate receptor-dependent.</text>
</comment>
<comment type="subcellular location">
    <molecule>Isoform 2</molecule>
    <subcellularLocation>
        <location evidence="49">Nucleus</location>
    </subcellularLocation>
    <subcellularLocation>
        <location evidence="49">Cytoplasm</location>
    </subcellularLocation>
    <text evidence="49">A localization to the nucleus and the cytoplasm has also been reported for ASAH1, most probably for isoforms devoid of a signal peptide.</text>
</comment>
<comment type="alternative products">
    <event type="alternative splicing"/>
    <isoform>
        <id>Q13510-1</id>
        <name>1</name>
        <sequence type="displayed"/>
    </isoform>
    <isoform>
        <id>Q13510-2</id>
        <name>2</name>
        <sequence type="described" ref="VSP_037504"/>
    </isoform>
    <isoform>
        <id>Q13510-3</id>
        <name>3</name>
        <sequence type="described" ref="VSP_037504 VSP_046284 VSP_046285"/>
    </isoform>
</comment>
<comment type="tissue specificity">
    <text evidence="3">Broadly expressed with higher expression in heart.</text>
</comment>
<comment type="induction">
    <text evidence="16">Up-regulated by Ca(2+).</text>
</comment>
<comment type="PTM">
    <text evidence="6 29 30 35">N-glycosylated.</text>
</comment>
<comment type="PTM">
    <text evidence="6 10 29 30 33">Proteolytically cleaved into two chains alpha and beta that remain associated via a disulfide bond (PubMed:11451951, PubMed:29692406, PubMed:30525581, PubMed:7744740). Cleavage gives rise to a conformation change that activates the enzyme. The same catalytic Cys residue mediates the autoproteolytic cleavage and subsequent hydrolysis of lipid substrates (PubMed:29692406, PubMed:30525581). The beta chain may undergo an additional C-terminal processing (PubMed:12815059).</text>
</comment>
<comment type="disease" evidence="3 4 5 7 15 18 19 20 26 28 35">
    <disease id="DI-01606">
        <name>Farber lipogranulomatosis</name>
        <acronym>FRBRL</acronym>
        <description>An autosomal recessive lysosomal storage disorder characterized by subcutaneous lipid-loaded nodules, excruciating pain in the joints and extremities, and marked accumulation of ceramide in lysosomes. Disease severity is variable. The most severe disease subtype is a rare neonatal form with death occurring before 1 year of age.</description>
        <dbReference type="MIM" id="228000"/>
    </disease>
    <text>The disease is caused by variants affecting the gene represented in this entry.</text>
</comment>
<comment type="disease" evidence="22 24 27 31">
    <disease id="DI-03504">
        <name>Spinal muscular atrophy with progressive myoclonic epilepsy</name>
        <acronym>SMAPME</acronym>
        <description>An autosomal recessive neuromuscular disorder characterized by childhood onset of motor deficits and progressive myoclonic seizures, after normal developmental milestones. Proximal muscle weakness and generalized muscular atrophy are due to degeneration of spinal motor neurons. Myoclonic epilepsy is generally resistant to conventional therapy. The disease course is progressive and leads to respiratory muscle involvement and severe handicap or early death from respiratory insufficiency.</description>
        <dbReference type="MIM" id="159950"/>
    </disease>
    <text>The disease is caused by variants affecting the gene represented in this entry.</text>
</comment>
<comment type="miscellaneous">
    <text evidence="25 32 34">Switches substrate specificity upon intralysosomal accumulation of glycosphingolips (PubMed:26898341, PubMed:7852294). Such is the case in Gaucher disease where the regular catabolism of glucosylceramide (GluCer) fails due to the lack of GBA1 activity, its accumulation triggers the alternative catabolism by acid ceramidase which deacylates GluCer producing a free fatty acid and glucosylsphingosine (glucosylsphing-4-enine, GluSph) (PubMed:26898341, PubMed:7852294). Similarly, the intralysosomal accumulation of globoside Gb3 in Fabry disease due to an inactive GLA triggers its alternative catabolism by acid ceramidase, generating lysoGb3 (PubMed:26898341). Formation of lyso-glycosphingolipids might have harmful side-effects and contribute to the pathology, for instance GluSph causes an aberrant activation of mTORC1, suppressing normal lysosomal functions, including the clearance of pathogenic alpha-synuclein species (PubMed:36752535).</text>
</comment>
<comment type="miscellaneous">
    <molecule>Isoform 2</molecule>
    <text evidence="23 44">Mutagenesis in position: 25:L-&gt;A (Loss of interaction with NR5A1).</text>
</comment>
<comment type="similarity">
    <text evidence="44">Belongs to the acid ceramidase family.</text>
</comment>
<comment type="sequence caution" evidence="44">
    <conflict type="frameshift">
        <sequence resource="EMBL-CDS" id="AAC73009"/>
    </conflict>
</comment>
<keyword id="KW-0002">3D-structure</keyword>
<keyword id="KW-0025">Alternative splicing</keyword>
<keyword id="KW-0963">Cytoplasm</keyword>
<keyword id="KW-0903">Direct protein sequencing</keyword>
<keyword id="KW-0225">Disease variant</keyword>
<keyword id="KW-1015">Disulfide bond</keyword>
<keyword id="KW-0887">Epilepsy</keyword>
<keyword id="KW-0325">Glycoprotein</keyword>
<keyword id="KW-0378">Hydrolase</keyword>
<keyword id="KW-0443">Lipid metabolism</keyword>
<keyword id="KW-0458">Lysosome</keyword>
<keyword id="KW-0523">Neurodegeneration</keyword>
<keyword id="KW-0539">Nucleus</keyword>
<keyword id="KW-1267">Proteomics identification</keyword>
<keyword id="KW-1185">Reference proteome</keyword>
<keyword id="KW-0964">Secreted</keyword>
<keyword id="KW-0732">Signal</keyword>
<keyword id="KW-0746">Sphingolipid metabolism</keyword>
<name>ASAH1_HUMAN</name>
<organism>
    <name type="scientific">Homo sapiens</name>
    <name type="common">Human</name>
    <dbReference type="NCBI Taxonomy" id="9606"/>
    <lineage>
        <taxon>Eukaryota</taxon>
        <taxon>Metazoa</taxon>
        <taxon>Chordata</taxon>
        <taxon>Craniata</taxon>
        <taxon>Vertebrata</taxon>
        <taxon>Euteleostomi</taxon>
        <taxon>Mammalia</taxon>
        <taxon>Eutheria</taxon>
        <taxon>Euarchontoglires</taxon>
        <taxon>Primates</taxon>
        <taxon>Haplorrhini</taxon>
        <taxon>Catarrhini</taxon>
        <taxon>Hominidae</taxon>
        <taxon>Homo</taxon>
    </lineage>
</organism>
<accession>Q13510</accession>
<accession>E9PDS0</accession>
<accession>Q6W898</accession>
<accession>Q96AS2</accession>
<dbReference type="EC" id="3.5.1.23" evidence="3 6 10 12 29 33 35"/>
<dbReference type="EC" id="3.5.1.109" evidence="25 34"/>
<dbReference type="EC" id="3.5.1.-" evidence="12"/>
<dbReference type="EMBL" id="U70063">
    <property type="protein sequence ID" value="AAC50907.1"/>
    <property type="molecule type" value="mRNA"/>
</dbReference>
<dbReference type="EMBL" id="U47674">
    <property type="protein sequence ID" value="AAC73009.1"/>
    <property type="status" value="ALT_FRAME"/>
    <property type="molecule type" value="mRNA"/>
</dbReference>
<dbReference type="EMBL" id="AY305384">
    <property type="protein sequence ID" value="AAQ75550.1"/>
    <property type="molecule type" value="mRNA"/>
</dbReference>
<dbReference type="EMBL" id="AF220175">
    <property type="protein sequence ID" value="AAF91230.1"/>
    <property type="molecule type" value="Genomic_DNA"/>
</dbReference>
<dbReference type="EMBL" id="AF220172">
    <property type="protein sequence ID" value="AAF91230.1"/>
    <property type="status" value="JOINED"/>
    <property type="molecule type" value="Genomic_DNA"/>
</dbReference>
<dbReference type="EMBL" id="AF220173">
    <property type="protein sequence ID" value="AAF91230.1"/>
    <property type="status" value="JOINED"/>
    <property type="molecule type" value="Genomic_DNA"/>
</dbReference>
<dbReference type="EMBL" id="AC124242">
    <property type="status" value="NOT_ANNOTATED_CDS"/>
    <property type="molecule type" value="Genomic_DNA"/>
</dbReference>
<dbReference type="EMBL" id="BC016481">
    <property type="protein sequence ID" value="AAH16481.1"/>
    <property type="molecule type" value="mRNA"/>
</dbReference>
<dbReference type="EMBL" id="BC016828">
    <property type="protein sequence ID" value="AAH16828.1"/>
    <property type="molecule type" value="mRNA"/>
</dbReference>
<dbReference type="CCDS" id="CCDS47813.1">
    <molecule id="Q13510-3"/>
</dbReference>
<dbReference type="CCDS" id="CCDS6005.1">
    <molecule id="Q13510-2"/>
</dbReference>
<dbReference type="CCDS" id="CCDS6006.1">
    <molecule id="Q13510-1"/>
</dbReference>
<dbReference type="RefSeq" id="NP_001120977.1">
    <molecule id="Q13510-3"/>
    <property type="nucleotide sequence ID" value="NM_001127505.3"/>
</dbReference>
<dbReference type="RefSeq" id="NP_004306.3">
    <molecule id="Q13510-2"/>
    <property type="nucleotide sequence ID" value="NM_004315.5"/>
</dbReference>
<dbReference type="RefSeq" id="NP_808592.2">
    <molecule id="Q13510-1"/>
    <property type="nucleotide sequence ID" value="NM_177924.5"/>
</dbReference>
<dbReference type="PDB" id="5U7Z">
    <property type="method" value="X-ray"/>
    <property type="resolution" value="2.50 A"/>
    <property type="chains" value="A/C=22-142, B/D=143-395"/>
</dbReference>
<dbReference type="PDB" id="6MHM">
    <property type="method" value="X-ray"/>
    <property type="resolution" value="2.74 A"/>
    <property type="chains" value="A/C=22-142, B/D=143-395"/>
</dbReference>
<dbReference type="PDBsum" id="5U7Z"/>
<dbReference type="PDBsum" id="6MHM"/>
<dbReference type="SMR" id="Q13510"/>
<dbReference type="BioGRID" id="106920">
    <property type="interactions" value="102"/>
</dbReference>
<dbReference type="CORUM" id="Q13510"/>
<dbReference type="FunCoup" id="Q13510">
    <property type="interactions" value="910"/>
</dbReference>
<dbReference type="IntAct" id="Q13510">
    <property type="interactions" value="46"/>
</dbReference>
<dbReference type="MINT" id="Q13510"/>
<dbReference type="STRING" id="9606.ENSP00000371152"/>
<dbReference type="BindingDB" id="Q13510"/>
<dbReference type="ChEMBL" id="CHEMBL5463"/>
<dbReference type="DrugCentral" id="Q13510"/>
<dbReference type="SwissLipids" id="SLP:000000162"/>
<dbReference type="MEROPS" id="C89.001"/>
<dbReference type="GlyConnect" id="986">
    <property type="glycosylation" value="25 N-Linked glycans (4 sites)"/>
</dbReference>
<dbReference type="GlyCosmos" id="Q13510">
    <property type="glycosylation" value="6 sites, 26 glycans"/>
</dbReference>
<dbReference type="GlyGen" id="Q13510">
    <property type="glycosylation" value="8 sites, 120 N-linked glycans (4 sites), 1 O-linked glycan (1 site)"/>
</dbReference>
<dbReference type="iPTMnet" id="Q13510"/>
<dbReference type="PhosphoSitePlus" id="Q13510"/>
<dbReference type="SwissPalm" id="Q13510"/>
<dbReference type="BioMuta" id="ASAH1"/>
<dbReference type="DMDM" id="239938949"/>
<dbReference type="jPOST" id="Q13510"/>
<dbReference type="MassIVE" id="Q13510"/>
<dbReference type="PaxDb" id="9606-ENSP00000371152"/>
<dbReference type="PeptideAtlas" id="Q13510"/>
<dbReference type="ProteomicsDB" id="19735"/>
<dbReference type="ProteomicsDB" id="59511">
    <molecule id="Q13510-1"/>
</dbReference>
<dbReference type="ProteomicsDB" id="59512">
    <molecule id="Q13510-2"/>
</dbReference>
<dbReference type="Pumba" id="Q13510"/>
<dbReference type="TopDownProteomics" id="Q13510-1">
    <molecule id="Q13510-1"/>
</dbReference>
<dbReference type="Antibodypedia" id="1611">
    <property type="antibodies" value="304 antibodies from 31 providers"/>
</dbReference>
<dbReference type="DNASU" id="427"/>
<dbReference type="Ensembl" id="ENST00000314146.10">
    <molecule id="Q13510-3"/>
    <property type="protein sequence ID" value="ENSP00000326970.10"/>
    <property type="gene ID" value="ENSG00000104763.20"/>
</dbReference>
<dbReference type="Ensembl" id="ENST00000381733.9">
    <molecule id="Q13510-2"/>
    <property type="protein sequence ID" value="ENSP00000371152.4"/>
    <property type="gene ID" value="ENSG00000104763.20"/>
</dbReference>
<dbReference type="Ensembl" id="ENST00000635998.1">
    <molecule id="Q13510-1"/>
    <property type="protein sequence ID" value="ENSP00000490506.1"/>
    <property type="gene ID" value="ENSG00000104763.20"/>
</dbReference>
<dbReference type="Ensembl" id="ENST00000637790.2">
    <molecule id="Q13510-1"/>
    <property type="protein sequence ID" value="ENSP00000490272.1"/>
    <property type="gene ID" value="ENSG00000104763.20"/>
</dbReference>
<dbReference type="GeneID" id="427"/>
<dbReference type="KEGG" id="hsa:427"/>
<dbReference type="MANE-Select" id="ENST00000637790.2">
    <property type="protein sequence ID" value="ENSP00000490272.1"/>
    <property type="RefSeq nucleotide sequence ID" value="NM_177924.5"/>
    <property type="RefSeq protein sequence ID" value="NP_808592.2"/>
</dbReference>
<dbReference type="UCSC" id="uc003wyl.3">
    <molecule id="Q13510-1"/>
    <property type="organism name" value="human"/>
</dbReference>
<dbReference type="AGR" id="HGNC:735"/>
<dbReference type="CTD" id="427"/>
<dbReference type="DisGeNET" id="427"/>
<dbReference type="GeneCards" id="ASAH1"/>
<dbReference type="GeneReviews" id="ASAH1"/>
<dbReference type="HGNC" id="HGNC:735">
    <property type="gene designation" value="ASAH1"/>
</dbReference>
<dbReference type="HPA" id="ENSG00000104763">
    <property type="expression patterns" value="Tissue enhanced (heart)"/>
</dbReference>
<dbReference type="MalaCards" id="ASAH1"/>
<dbReference type="MIM" id="159950">
    <property type="type" value="phenotype"/>
</dbReference>
<dbReference type="MIM" id="228000">
    <property type="type" value="phenotype"/>
</dbReference>
<dbReference type="MIM" id="613468">
    <property type="type" value="gene"/>
</dbReference>
<dbReference type="neXtProt" id="NX_Q13510"/>
<dbReference type="OpenTargets" id="ENSG00000104763"/>
<dbReference type="Orphanet" id="333">
    <property type="disease" value="Farber disease"/>
</dbReference>
<dbReference type="Orphanet" id="2590">
    <property type="disease" value="Spinal muscular atrophy-progressive myoclonic epilepsy syndrome"/>
</dbReference>
<dbReference type="PharmGKB" id="PA35025"/>
<dbReference type="VEuPathDB" id="HostDB:ENSG00000104763"/>
<dbReference type="eggNOG" id="ENOG502QVBG">
    <property type="taxonomic scope" value="Eukaryota"/>
</dbReference>
<dbReference type="GeneTree" id="ENSGT00530000063548"/>
<dbReference type="HOGENOM" id="CLU_054401_0_0_1"/>
<dbReference type="InParanoid" id="Q13510"/>
<dbReference type="OMA" id="GWWMSFL"/>
<dbReference type="OrthoDB" id="5273684at2759"/>
<dbReference type="PAN-GO" id="Q13510">
    <property type="GO annotations" value="1 GO annotation based on evolutionary models"/>
</dbReference>
<dbReference type="PhylomeDB" id="Q13510"/>
<dbReference type="TreeFam" id="TF313219"/>
<dbReference type="BRENDA" id="3.5.1.23">
    <property type="organism ID" value="2681"/>
</dbReference>
<dbReference type="PathwayCommons" id="Q13510"/>
<dbReference type="Reactome" id="R-HSA-6798695">
    <property type="pathway name" value="Neutrophil degranulation"/>
</dbReference>
<dbReference type="Reactome" id="R-HSA-9840310">
    <property type="pathway name" value="Glycosphingolipid catabolism"/>
</dbReference>
<dbReference type="Reactome" id="R-HSA-9857377">
    <property type="pathway name" value="Regulation of MITF-M-dependent genes involved in lysosome biogenesis and autophagy"/>
</dbReference>
<dbReference type="SABIO-RK" id="Q13510"/>
<dbReference type="SignaLink" id="Q13510"/>
<dbReference type="UniPathway" id="UPA00222"/>
<dbReference type="BioGRID-ORCS" id="427">
    <property type="hits" value="19 hits in 1161 CRISPR screens"/>
</dbReference>
<dbReference type="ChiTaRS" id="ASAH1">
    <property type="organism name" value="human"/>
</dbReference>
<dbReference type="GeneWiki" id="ASAH1"/>
<dbReference type="GenomeRNAi" id="427"/>
<dbReference type="Pharos" id="Q13510">
    <property type="development level" value="Tchem"/>
</dbReference>
<dbReference type="PRO" id="PR:Q13510"/>
<dbReference type="Proteomes" id="UP000005640">
    <property type="component" value="Chromosome 8"/>
</dbReference>
<dbReference type="RNAct" id="Q13510">
    <property type="molecule type" value="protein"/>
</dbReference>
<dbReference type="Bgee" id="ENSG00000104763">
    <property type="expression patterns" value="Expressed in heart right ventricle and 206 other cell types or tissues"/>
</dbReference>
<dbReference type="ExpressionAtlas" id="Q13510">
    <property type="expression patterns" value="baseline and differential"/>
</dbReference>
<dbReference type="GO" id="GO:0070062">
    <property type="term" value="C:extracellular exosome"/>
    <property type="evidence" value="ECO:0007005"/>
    <property type="project" value="UniProtKB"/>
</dbReference>
<dbReference type="GO" id="GO:0005576">
    <property type="term" value="C:extracellular region"/>
    <property type="evidence" value="ECO:0000304"/>
    <property type="project" value="Reactome"/>
</dbReference>
<dbReference type="GO" id="GO:0005615">
    <property type="term" value="C:extracellular space"/>
    <property type="evidence" value="ECO:0000314"/>
    <property type="project" value="UniProtKB"/>
</dbReference>
<dbReference type="GO" id="GO:1904813">
    <property type="term" value="C:ficolin-1-rich granule lumen"/>
    <property type="evidence" value="ECO:0000304"/>
    <property type="project" value="Reactome"/>
</dbReference>
<dbReference type="GO" id="GO:0043202">
    <property type="term" value="C:lysosomal lumen"/>
    <property type="evidence" value="ECO:0000304"/>
    <property type="project" value="Reactome"/>
</dbReference>
<dbReference type="GO" id="GO:0005764">
    <property type="term" value="C:lysosome"/>
    <property type="evidence" value="ECO:0000314"/>
    <property type="project" value="UniProtKB"/>
</dbReference>
<dbReference type="GO" id="GO:0016020">
    <property type="term" value="C:membrane"/>
    <property type="evidence" value="ECO:0007669"/>
    <property type="project" value="GOC"/>
</dbReference>
<dbReference type="GO" id="GO:0005634">
    <property type="term" value="C:nucleus"/>
    <property type="evidence" value="ECO:0000314"/>
    <property type="project" value="UniProtKB"/>
</dbReference>
<dbReference type="GO" id="GO:1904724">
    <property type="term" value="C:tertiary granule lumen"/>
    <property type="evidence" value="ECO:0000304"/>
    <property type="project" value="Reactome"/>
</dbReference>
<dbReference type="GO" id="GO:0017064">
    <property type="term" value="F:fatty acid amide hydrolase activity"/>
    <property type="evidence" value="ECO:0007669"/>
    <property type="project" value="InterPro"/>
</dbReference>
<dbReference type="GO" id="GO:0016811">
    <property type="term" value="F:hydrolase activity, acting on carbon-nitrogen (but not peptide) bonds, in linear amides"/>
    <property type="evidence" value="ECO:0000314"/>
    <property type="project" value="UniProtKB"/>
</dbReference>
<dbReference type="GO" id="GO:0017040">
    <property type="term" value="F:N-acylsphingosine amidohydrolase activity"/>
    <property type="evidence" value="ECO:0000314"/>
    <property type="project" value="UniProtKB"/>
</dbReference>
<dbReference type="GO" id="GO:0016922">
    <property type="term" value="F:nuclear receptor binding"/>
    <property type="evidence" value="ECO:0000353"/>
    <property type="project" value="UniProtKB"/>
</dbReference>
<dbReference type="GO" id="GO:0003714">
    <property type="term" value="F:transcription corepressor activity"/>
    <property type="evidence" value="ECO:0000315"/>
    <property type="project" value="UniProtKB"/>
</dbReference>
<dbReference type="GO" id="GO:0071356">
    <property type="term" value="P:cellular response to tumor necrosis factor"/>
    <property type="evidence" value="ECO:0000250"/>
    <property type="project" value="UniProtKB"/>
</dbReference>
<dbReference type="GO" id="GO:0046513">
    <property type="term" value="P:ceramide biosynthetic process"/>
    <property type="evidence" value="ECO:0000314"/>
    <property type="project" value="UniProtKB"/>
</dbReference>
<dbReference type="GO" id="GO:0046514">
    <property type="term" value="P:ceramide catabolic process"/>
    <property type="evidence" value="ECO:0000314"/>
    <property type="project" value="UniProtKB"/>
</dbReference>
<dbReference type="GO" id="GO:0006631">
    <property type="term" value="P:fatty acid metabolic process"/>
    <property type="evidence" value="ECO:0007669"/>
    <property type="project" value="InterPro"/>
</dbReference>
<dbReference type="GO" id="GO:0030216">
    <property type="term" value="P:keratinocyte differentiation"/>
    <property type="evidence" value="ECO:0000315"/>
    <property type="project" value="UniProtKB"/>
</dbReference>
<dbReference type="GO" id="GO:0062098">
    <property type="term" value="P:regulation of programmed necrotic cell death"/>
    <property type="evidence" value="ECO:0000250"/>
    <property type="project" value="UniProtKB"/>
</dbReference>
<dbReference type="GO" id="GO:0050810">
    <property type="term" value="P:regulation of steroid biosynthetic process"/>
    <property type="evidence" value="ECO:0000315"/>
    <property type="project" value="UniProtKB"/>
</dbReference>
<dbReference type="GO" id="GO:0046512">
    <property type="term" value="P:sphingosine biosynthetic process"/>
    <property type="evidence" value="ECO:0000314"/>
    <property type="project" value="UniProtKB"/>
</dbReference>
<dbReference type="CDD" id="cd01903">
    <property type="entry name" value="Ntn_AC_NAAA"/>
    <property type="match status" value="1"/>
</dbReference>
<dbReference type="FunFam" id="3.60.60.10:FF:000002">
    <property type="entry name" value="N-acylsphingosine amidohydrolase 1"/>
    <property type="match status" value="1"/>
</dbReference>
<dbReference type="Gene3D" id="3.60.60.10">
    <property type="entry name" value="Penicillin V Acylase, Chain A"/>
    <property type="match status" value="1"/>
</dbReference>
<dbReference type="InterPro" id="IPR016699">
    <property type="entry name" value="Acid_ceramidase-like"/>
</dbReference>
<dbReference type="InterPro" id="IPR029130">
    <property type="entry name" value="Acid_ceramidase_N"/>
</dbReference>
<dbReference type="InterPro" id="IPR029132">
    <property type="entry name" value="CBAH/NAAA_C"/>
</dbReference>
<dbReference type="PANTHER" id="PTHR28583">
    <property type="entry name" value="ACID AMIDASE"/>
    <property type="match status" value="1"/>
</dbReference>
<dbReference type="PANTHER" id="PTHR28583:SF1">
    <property type="entry name" value="ACID CERAMIDASE"/>
    <property type="match status" value="1"/>
</dbReference>
<dbReference type="Pfam" id="PF02275">
    <property type="entry name" value="CBAH"/>
    <property type="match status" value="1"/>
</dbReference>
<dbReference type="Pfam" id="PF15508">
    <property type="entry name" value="NAAA-beta"/>
    <property type="match status" value="1"/>
</dbReference>
<dbReference type="PIRSF" id="PIRSF017632">
    <property type="entry name" value="Acid_ceramidase-like"/>
    <property type="match status" value="1"/>
</dbReference>
<proteinExistence type="evidence at protein level"/>
<sequence>MPGRSCVALVLLAAAVSCAVAQHAPPWTEDCRKSTYPPSGPTYRGAVPWYTINLDLPPYKRWHELMLDKAPVLKVIVNSLKNMINTFVPSGKIMQVVDEKLPGLLGNFPGPFEEEMKGIAAVTDIPLGEIISFNIFYELFTICTSIVAEDKKGHLIHGRNMDFGVFLGWNINNDTWVITEQLKPLTVNLDFQRNNKTVFKASSFAGYVGMLTGFKPGLFSLTLNERFSINGGYLGILEWILGKKDVMWIGFLTRTVLENSTSYEEAKNLLTKTKILAPAYFILGGNQSGEGCVITRDRKESLDVYELDAKQGRWYVVQTNYDRWKHPFFLDDRRTPAKMCLNRTSQENISFETMYDVLSTKPVLNKLTVYTTLIDVTKGQFETYLRDCPDPCIGW</sequence>
<feature type="signal peptide" evidence="2">
    <location>
        <begin position="1"/>
        <end position="21"/>
    </location>
</feature>
<feature type="chain" id="PRO_0000002312" description="Acid ceramidase subunit alpha" evidence="50">
    <location>
        <begin position="22"/>
        <end position="142"/>
    </location>
</feature>
<feature type="chain" id="PRO_0000002313" description="Acid ceramidase subunit beta" evidence="50">
    <location>
        <begin position="143"/>
        <end position="395"/>
    </location>
</feature>
<feature type="active site" description="Nucleophile" evidence="29 30">
    <location>
        <position position="143"/>
    </location>
</feature>
<feature type="site" description="Important for catalytic activity" evidence="29">
    <location>
        <position position="162"/>
    </location>
</feature>
<feature type="site" description="Important for catalytic activity" evidence="29">
    <location>
        <position position="320"/>
    </location>
</feature>
<feature type="site" description="Important for catalytic activity" evidence="29">
    <location>
        <position position="333"/>
    </location>
</feature>
<feature type="glycosylation site" description="N-linked (GlcNAc...) asparagine" evidence="29 53">
    <location>
        <position position="173"/>
    </location>
</feature>
<feature type="glycosylation site" description="N-linked (GlcNAc...) asparagine" evidence="2">
    <location>
        <position position="195"/>
    </location>
</feature>
<feature type="glycosylation site" description="N-linked (GlcNAc...) asparagine" evidence="8 13 14 17 29 53">
    <location>
        <position position="259"/>
    </location>
</feature>
<feature type="glycosylation site" description="N-linked (GlcNAc...) asparagine" evidence="8 17 29 53">
    <location>
        <position position="286"/>
    </location>
</feature>
<feature type="glycosylation site" description="N-linked (GlcNAc...) asparagine" evidence="29 53">
    <location>
        <position position="342"/>
    </location>
</feature>
<feature type="glycosylation site" description="N-linked (GlcNAc...) asparagine" evidence="2">
    <location>
        <position position="348"/>
    </location>
</feature>
<feature type="disulfide bond" description="Interchain (between alpha and beta subunits)" evidence="29 30 53 54">
    <location>
        <begin position="31"/>
        <end position="340"/>
    </location>
</feature>
<feature type="disulfide bond" evidence="29 30 53 54">
    <location>
        <begin position="388"/>
        <end position="392"/>
    </location>
</feature>
<feature type="splice variant" id="VSP_037504" description="In isoform 2 and isoform 3." evidence="38 43">
    <original>MPGRSCVALVLLAAAVSCAVAQHAPP</original>
    <variation>MNCCIGLGEKARGSHRASYPSLSALFTEASILGFGSFAVKAQ</variation>
    <location>
        <begin position="1"/>
        <end position="26"/>
    </location>
</feature>
<feature type="splice variant" id="VSP_046284" description="In isoform 3." evidence="38">
    <original>T</original>
    <variation>TVFPAVIR</variation>
    <location>
        <position position="42"/>
    </location>
</feature>
<feature type="splice variant" id="VSP_046285" description="In isoform 3." evidence="38">
    <location>
        <begin position="73"/>
        <end position="101"/>
    </location>
</feature>
<feature type="sequence variant" id="VAR_038166" description="In FRBRL." evidence="4">
    <original>Q</original>
    <variation>H</variation>
    <location>
        <position position="22"/>
    </location>
</feature>
<feature type="sequence variant" id="VAR_038167" description="In FRBRL." evidence="4">
    <original>H</original>
    <variation>D</variation>
    <location>
        <position position="23"/>
    </location>
</feature>
<feature type="sequence variant" id="VAR_021579" description="In FRBRL; dbSNP:rs137853595." evidence="5">
    <original>Y</original>
    <variation>C</variation>
    <location>
        <position position="36"/>
    </location>
</feature>
<feature type="sequence variant" id="VAR_081279" description="In SMAPME; uncertain significance; decreased ceramide catabolic process; dbSNP:rs779888892." evidence="27">
    <original>T</original>
    <variation>A</variation>
    <location>
        <position position="42"/>
    </location>
</feature>
<feature type="sequence variant" id="VAR_068722" description="In SMAPME; results in reduced activity; dbSNP:rs145873635." evidence="22">
    <original>T</original>
    <variation>M</variation>
    <location>
        <position position="42"/>
    </location>
</feature>
<feature type="sequence variant" id="VAR_057979" description="In dbSNP:rs10103355.">
    <original>A</original>
    <variation>V</variation>
    <location>
        <position position="70"/>
    </location>
</feature>
<feature type="sequence variant" id="VAR_008860" description="In dbSNP:rs1071645." evidence="4 11 35 36">
    <original>V</original>
    <variation>M</variation>
    <location>
        <position position="72"/>
    </location>
</feature>
<feature type="sequence variant" id="VAR_057980" description="In dbSNP:rs1071645.">
    <original>V</original>
    <variation>M</variation>
    <location>
        <position position="88"/>
    </location>
</feature>
<feature type="sequence variant" id="VAR_008861" description="In dbSNP:rs1049874." evidence="4 11 35 36">
    <original>I</original>
    <variation>V</variation>
    <location>
        <position position="93"/>
    </location>
</feature>
<feature type="sequence variant" id="VAR_021580" description="In FRBRL; decreased ceramide catabolic process." evidence="7">
    <location>
        <position position="96"/>
    </location>
</feature>
<feature type="sequence variant" id="VAR_021581" description="In FRBRL; decreased ceramide catabolic process." evidence="7">
    <original>V</original>
    <variation>E</variation>
    <location>
        <position position="97"/>
    </location>
</feature>
<feature type="sequence variant" id="VAR_071994" description="In FRBRL." evidence="19">
    <original>V</original>
    <variation>G</variation>
    <location>
        <position position="97"/>
    </location>
</feature>
<feature type="sequence variant" id="VAR_038168" description="In dbSNP:rs2472205.">
    <original>D</original>
    <variation>E</variation>
    <location>
        <position position="124"/>
    </location>
</feature>
<feature type="sequence variant" id="VAR_021582" description="In FRBRL; loss of ceramidase activity; dbSNP:rs137853594." evidence="3 4">
    <original>E</original>
    <variation>V</variation>
    <location>
        <position position="138"/>
    </location>
</feature>
<feature type="sequence variant" id="VAR_072247" description="In SMAPME; decreased protein abundance; alters the splicing of ASAH1 transcripts; dbSNP:rs200455852." evidence="24 31">
    <original>K</original>
    <variation>N</variation>
    <location>
        <position position="152"/>
    </location>
</feature>
<feature type="sequence variant" id="VAR_071995" description="In FRBRL." evidence="18">
    <original>G</original>
    <variation>W</variation>
    <location>
        <position position="168"/>
    </location>
</feature>
<feature type="sequence variant" id="VAR_081280" description="In FRBRL; uncertain significance; dbSNP:rs756455049." evidence="26">
    <original>W</original>
    <variation>R</variation>
    <location>
        <position position="169"/>
    </location>
</feature>
<feature type="sequence variant" id="VAR_038169" description="In FRBRL; dbSNP:rs137853597." evidence="15">
    <original>L</original>
    <variation>V</variation>
    <location>
        <position position="182"/>
    </location>
</feature>
<feature type="sequence variant" id="VAR_008862" description="In FRBRL; dbSNP:rs137853593." evidence="4 35">
    <original>T</original>
    <variation>K</variation>
    <location>
        <position position="222"/>
    </location>
</feature>
<feature type="sequence variant" id="VAR_021583" description="In FRBRL; decreased ceramide catabolic process; dbSNP:rs1554808625." evidence="7 28">
    <original>G</original>
    <variation>R</variation>
    <location>
        <position position="235"/>
    </location>
</feature>
<feature type="sequence variant" id="VAR_038170" description="In dbSNP:rs10103355." evidence="4 11 35 36">
    <original>V</original>
    <variation>A</variation>
    <location>
        <position position="246"/>
    </location>
</feature>
<feature type="sequence variant" id="VAR_021584" description="In FRBRL; uncertain significance; loss of ceramidase activity." evidence="3 26">
    <original>R</original>
    <variation>G</variation>
    <location>
        <position position="254"/>
    </location>
</feature>
<feature type="sequence variant" id="VAR_081281" description="In SMAPME; loss of protein abundance; the corresponding mRNA is not detected and probably degraded." evidence="24">
    <location>
        <begin position="284"/>
        <end position="395"/>
    </location>
</feature>
<feature type="sequence variant" id="VAR_021585" description="In FRBRL; dbSNP:rs137853596." evidence="4 5">
    <original>N</original>
    <variation>D</variation>
    <location>
        <position position="320"/>
    </location>
</feature>
<feature type="sequence variant" id="VAR_081282" description="In FRBRL; uncertain significance; dbSNP:rs543697946." evidence="28">
    <original>R</original>
    <variation>C</variation>
    <location>
        <position position="333"/>
    </location>
</feature>
<feature type="sequence variant" id="VAR_021586" description="In FRBRL; loss of ceramidase activity." evidence="3">
    <original>P</original>
    <variation>R</variation>
    <location>
        <position position="362"/>
    </location>
</feature>
<feature type="sequence variant" id="VAR_021587" description="In dbSNP:rs17636067." evidence="7">
    <original>V</original>
    <variation>I</variation>
    <location>
        <position position="369"/>
    </location>
</feature>
<feature type="mutagenesis site" description="No effect on autocatalytic processing, but loss of ceramidase activity, when associated with 165-Q--Q-167." evidence="29">
    <original>L</original>
    <variation>Q</variation>
    <location>
        <position position="80"/>
    </location>
</feature>
<feature type="mutagenesis site" description="Decreased rate of autocatalytic processing." evidence="29">
    <original>T</original>
    <variation>A</variation>
    <location>
        <position position="141"/>
    </location>
</feature>
<feature type="mutagenesis site" description="Loss of autocatalytic processing. Loss of ceramidase activity." evidence="29">
    <original>C</original>
    <variation>A</variation>
    <location>
        <position position="143"/>
    </location>
</feature>
<feature type="mutagenesis site" description="Strongly decreased autocatalytic processing. Moderately decreased ceramidase activity." evidence="29">
    <original>R</original>
    <variation>Q</variation>
    <location>
        <position position="159"/>
    </location>
</feature>
<feature type="mutagenesis site" description="Strongly decreased autocatalytic processing. Strongly decreased ceramidase activity." evidence="29">
    <original>D</original>
    <variation>N</variation>
    <location>
        <position position="162"/>
    </location>
</feature>
<feature type="mutagenesis site" description="No effect on autocatalytic processing, but loss of ceramidase activity, when associated with Q-80." evidence="29">
    <original>VFL</original>
    <variation>QFQ</variation>
    <location>
        <begin position="165"/>
        <end position="167"/>
    </location>
</feature>
<feature type="mutagenesis site" description="Moderately decreased autocatalytic processing, but loss of ceramidase activity, when associated with Q-176." evidence="29">
    <original>WNI</original>
    <variation>QNQ</variation>
    <location>
        <begin position="169"/>
        <end position="171"/>
    </location>
</feature>
<feature type="mutagenesis site" description="Loss of ceramide catabolic process." evidence="6">
    <original>N</original>
    <variation>Q</variation>
    <location>
        <position position="173"/>
    </location>
</feature>
<feature type="mutagenesis site" description="Moderately decreased autocatalytic processing, but loss of ceramidase activity, when associated with 169-Q--Q-171." evidence="29">
    <original>W</original>
    <variation>Q</variation>
    <location>
        <position position="176"/>
    </location>
</feature>
<feature type="mutagenesis site" description="No effect on ceramide catabolic process." evidence="6">
    <original>N</original>
    <variation>Q</variation>
    <location>
        <position position="195"/>
    </location>
</feature>
<feature type="mutagenesis site" description="Loss of ceramide catabolic process." evidence="6">
    <original>N</original>
    <variation>Q</variation>
    <location>
        <position position="259"/>
    </location>
</feature>
<feature type="mutagenesis site" description="No effect on ceramide catabolic process." evidence="6">
    <original>N</original>
    <variation>Q</variation>
    <location>
        <position position="286"/>
    </location>
</feature>
<feature type="mutagenesis site" description="Strongly decreased autocatalytic processing. Mildly decreased ceramidase activity." evidence="29">
    <original>N</original>
    <variation>A</variation>
    <location>
        <position position="320"/>
    </location>
</feature>
<feature type="mutagenesis site" description="No effect on autocatalytic processing, but strongly decreased ceramidase activity." evidence="29">
    <original>FFL</original>
    <variation>QQQ</variation>
    <location>
        <begin position="328"/>
        <end position="330"/>
    </location>
</feature>
<feature type="mutagenesis site" description="Mildly decreased autocatalytic processing. Loss of ceramidase activity." evidence="29">
    <original>R</original>
    <variation>Q</variation>
    <location>
        <position position="333"/>
    </location>
</feature>
<feature type="mutagenesis site" description="Loss of ceramide catabolic process." evidence="6">
    <original>N</original>
    <variation>Q</variation>
    <location>
        <position position="342"/>
    </location>
</feature>
<feature type="mutagenesis site" description="No effect on ceramide catabolic process." evidence="6">
    <original>N</original>
    <variation>Q</variation>
    <location>
        <position position="348"/>
    </location>
</feature>
<feature type="sequence conflict" description="In Ref. 4; AAQ75550." evidence="44" ref="4">
    <original>V</original>
    <variation>A</variation>
    <location>
        <position position="122"/>
    </location>
</feature>
<feature type="sequence conflict" description="In Ref. 8; AAH16828." evidence="44" ref="8">
    <original>I</original>
    <variation>V</variation>
    <location>
        <position position="142"/>
    </location>
</feature>
<feature type="sequence conflict" description="In Ref. 4; AAQ75550." evidence="44" ref="4">
    <original>L</original>
    <variation>P</variation>
    <location>
        <position position="155"/>
    </location>
</feature>
<feature type="sequence conflict" description="In Ref. 4; AAQ75550." evidence="44" ref="4">
    <original>Y</original>
    <variation>N</variation>
    <location>
        <position position="233"/>
    </location>
</feature>
<feature type="sequence conflict" description="In Ref. 4; AAQ75550." evidence="44" ref="4">
    <original>L</original>
    <variation>P</variation>
    <location>
        <position position="364"/>
    </location>
</feature>
<feature type="turn" evidence="55">
    <location>
        <begin position="36"/>
        <end position="38"/>
    </location>
</feature>
<feature type="strand" evidence="55">
    <location>
        <begin position="43"/>
        <end position="46"/>
    </location>
</feature>
<feature type="strand" evidence="55">
    <location>
        <begin position="49"/>
        <end position="53"/>
    </location>
</feature>
<feature type="helix" evidence="55">
    <location>
        <begin position="58"/>
        <end position="60"/>
    </location>
</feature>
<feature type="helix" evidence="55">
    <location>
        <begin position="63"/>
        <end position="87"/>
    </location>
</feature>
<feature type="helix" evidence="55">
    <location>
        <begin position="90"/>
        <end position="105"/>
    </location>
</feature>
<feature type="helix" evidence="55">
    <location>
        <begin position="112"/>
        <end position="123"/>
    </location>
</feature>
<feature type="helix" evidence="55">
    <location>
        <begin position="127"/>
        <end position="134"/>
    </location>
</feature>
<feature type="helix" evidence="55">
    <location>
        <begin position="136"/>
        <end position="139"/>
    </location>
</feature>
<feature type="strand" evidence="55">
    <location>
        <begin position="144"/>
        <end position="149"/>
    </location>
</feature>
<feature type="strand" evidence="55">
    <location>
        <begin position="155"/>
        <end position="162"/>
    </location>
</feature>
<feature type="turn" evidence="55">
    <location>
        <begin position="171"/>
        <end position="174"/>
    </location>
</feature>
<feature type="helix" evidence="55">
    <location>
        <begin position="177"/>
        <end position="182"/>
    </location>
</feature>
<feature type="turn" evidence="55">
    <location>
        <begin position="183"/>
        <end position="185"/>
    </location>
</feature>
<feature type="strand" evidence="55">
    <location>
        <begin position="186"/>
        <end position="193"/>
    </location>
</feature>
<feature type="strand" evidence="55">
    <location>
        <begin position="196"/>
        <end position="204"/>
    </location>
</feature>
<feature type="strand" evidence="55">
    <location>
        <begin position="211"/>
        <end position="215"/>
    </location>
</feature>
<feature type="turn" evidence="55">
    <location>
        <begin position="216"/>
        <end position="218"/>
    </location>
</feature>
<feature type="strand" evidence="55">
    <location>
        <begin position="219"/>
        <end position="225"/>
    </location>
</feature>
<feature type="helix" evidence="55">
    <location>
        <begin position="231"/>
        <end position="240"/>
    </location>
</feature>
<feature type="helix" evidence="55">
    <location>
        <begin position="249"/>
        <end position="259"/>
    </location>
</feature>
<feature type="helix" evidence="55">
    <location>
        <begin position="263"/>
        <end position="272"/>
    </location>
</feature>
<feature type="strand" evidence="55">
    <location>
        <begin position="275"/>
        <end position="277"/>
    </location>
</feature>
<feature type="strand" evidence="55">
    <location>
        <begin position="279"/>
        <end position="284"/>
    </location>
</feature>
<feature type="strand" evidence="55">
    <location>
        <begin position="291"/>
        <end position="296"/>
    </location>
</feature>
<feature type="strand" evidence="55">
    <location>
        <begin position="301"/>
        <end position="306"/>
    </location>
</feature>
<feature type="turn" evidence="55">
    <location>
        <begin position="309"/>
        <end position="312"/>
    </location>
</feature>
<feature type="strand" evidence="55">
    <location>
        <begin position="315"/>
        <end position="318"/>
    </location>
</feature>
<feature type="strand" evidence="56">
    <location>
        <begin position="323"/>
        <end position="325"/>
    </location>
</feature>
<feature type="strand" evidence="55">
    <location>
        <begin position="328"/>
        <end position="330"/>
    </location>
</feature>
<feature type="helix" evidence="55">
    <location>
        <begin position="334"/>
        <end position="344"/>
    </location>
</feature>
<feature type="helix" evidence="55">
    <location>
        <begin position="346"/>
        <end position="348"/>
    </location>
</feature>
<feature type="helix" evidence="55">
    <location>
        <begin position="351"/>
        <end position="357"/>
    </location>
</feature>
<feature type="turn" evidence="55">
    <location>
        <begin position="361"/>
        <end position="363"/>
    </location>
</feature>
<feature type="strand" evidence="55">
    <location>
        <begin position="368"/>
        <end position="375"/>
    </location>
</feature>
<feature type="turn" evidence="55">
    <location>
        <begin position="376"/>
        <end position="379"/>
    </location>
</feature>
<feature type="strand" evidence="55">
    <location>
        <begin position="380"/>
        <end position="386"/>
    </location>
</feature>
<feature type="sequence variant" id="VAR_082799" description="In FRBRL; dbSNP:rs756455049." evidence="20">
    <original>W</original>
    <variation>R</variation>
    <location sequence="Q13510-2">
        <position position="185"/>
    </location>
</feature>
<feature type="sequence variant" id="VAR_082800" description="In FRBRL; dbSNP:rs1588973202." evidence="20">
    <original>K</original>
    <variation>Q</variation>
    <location sequence="Q13510-2">
        <position position="382"/>
    </location>
</feature>
<evidence type="ECO:0000250" key="1">
    <source>
        <dbReference type="UniProtKB" id="Q9WV54"/>
    </source>
</evidence>
<evidence type="ECO:0000255" key="2"/>
<evidence type="ECO:0000269" key="3">
    <source>
    </source>
</evidence>
<evidence type="ECO:0000269" key="4">
    <source>
    </source>
</evidence>
<evidence type="ECO:0000269" key="5">
    <source>
    </source>
</evidence>
<evidence type="ECO:0000269" key="6">
    <source>
    </source>
</evidence>
<evidence type="ECO:0000269" key="7">
    <source>
    </source>
</evidence>
<evidence type="ECO:0000269" key="8">
    <source>
    </source>
</evidence>
<evidence type="ECO:0000269" key="9">
    <source>
    </source>
</evidence>
<evidence type="ECO:0000269" key="10">
    <source>
    </source>
</evidence>
<evidence type="ECO:0000269" key="11">
    <source>
    </source>
</evidence>
<evidence type="ECO:0000269" key="12">
    <source>
    </source>
</evidence>
<evidence type="ECO:0000269" key="13">
    <source>
    </source>
</evidence>
<evidence type="ECO:0000269" key="14">
    <source>
    </source>
</evidence>
<evidence type="ECO:0000269" key="15">
    <source>
    </source>
</evidence>
<evidence type="ECO:0000269" key="16">
    <source>
    </source>
</evidence>
<evidence type="ECO:0000269" key="17">
    <source>
    </source>
</evidence>
<evidence type="ECO:0000269" key="18">
    <source>
    </source>
</evidence>
<evidence type="ECO:0000269" key="19">
    <source>
    </source>
</evidence>
<evidence type="ECO:0000269" key="20">
    <source>
    </source>
</evidence>
<evidence type="ECO:0000269" key="21">
    <source>
    </source>
</evidence>
<evidence type="ECO:0000269" key="22">
    <source>
    </source>
</evidence>
<evidence type="ECO:0000269" key="23">
    <source>
    </source>
</evidence>
<evidence type="ECO:0000269" key="24">
    <source>
    </source>
</evidence>
<evidence type="ECO:0000269" key="25">
    <source>
    </source>
</evidence>
<evidence type="ECO:0000269" key="26">
    <source>
    </source>
</evidence>
<evidence type="ECO:0000269" key="27">
    <source>
    </source>
</evidence>
<evidence type="ECO:0000269" key="28">
    <source>
    </source>
</evidence>
<evidence type="ECO:0000269" key="29">
    <source>
    </source>
</evidence>
<evidence type="ECO:0000269" key="30">
    <source>
    </source>
</evidence>
<evidence type="ECO:0000269" key="31">
    <source>
    </source>
</evidence>
<evidence type="ECO:0000269" key="32">
    <source>
    </source>
</evidence>
<evidence type="ECO:0000269" key="33">
    <source>
    </source>
</evidence>
<evidence type="ECO:0000269" key="34">
    <source>
    </source>
</evidence>
<evidence type="ECO:0000269" key="35">
    <source>
    </source>
</evidence>
<evidence type="ECO:0000269" key="36">
    <source ref="2"/>
</evidence>
<evidence type="ECO:0000303" key="37">
    <source>
    </source>
</evidence>
<evidence type="ECO:0000303" key="38">
    <source>
    </source>
</evidence>
<evidence type="ECO:0000303" key="39">
    <source>
    </source>
</evidence>
<evidence type="ECO:0000303" key="40">
    <source>
    </source>
</evidence>
<evidence type="ECO:0000303" key="41">
    <source>
    </source>
</evidence>
<evidence type="ECO:0000303" key="42">
    <source>
    </source>
</evidence>
<evidence type="ECO:0000303" key="43">
    <source ref="4"/>
</evidence>
<evidence type="ECO:0000305" key="44"/>
<evidence type="ECO:0000305" key="45">
    <source>
    </source>
</evidence>
<evidence type="ECO:0000305" key="46">
    <source>
    </source>
</evidence>
<evidence type="ECO:0000305" key="47">
    <source>
    </source>
</evidence>
<evidence type="ECO:0000305" key="48">
    <source>
    </source>
</evidence>
<evidence type="ECO:0000305" key="49">
    <source>
    </source>
</evidence>
<evidence type="ECO:0000305" key="50">
    <source>
    </source>
</evidence>
<evidence type="ECO:0000305" key="51">
    <source>
    </source>
</evidence>
<evidence type="ECO:0000312" key="52">
    <source>
        <dbReference type="HGNC" id="HGNC:735"/>
    </source>
</evidence>
<evidence type="ECO:0007744" key="53">
    <source>
        <dbReference type="PDB" id="5U7Z"/>
    </source>
</evidence>
<evidence type="ECO:0007744" key="54">
    <source>
        <dbReference type="PDB" id="6MHM"/>
    </source>
</evidence>
<evidence type="ECO:0007829" key="55">
    <source>
        <dbReference type="PDB" id="5U7Z"/>
    </source>
</evidence>
<evidence type="ECO:0007829" key="56">
    <source>
        <dbReference type="PDB" id="6MHM"/>
    </source>
</evidence>
<reference key="1">
    <citation type="journal article" date="1996" name="J. Biol. Chem.">
        <title>Molecular cloning and characterization of a full-length complementary DNA encoding human acid ceramidase. Identification of the first molecular lesion causing Farber disease.</title>
        <authorList>
            <person name="Koch J."/>
            <person name="Gaertner S."/>
            <person name="Li C.M."/>
            <person name="Quintern L.E."/>
            <person name="Bernardo K."/>
            <person name="Levran O."/>
            <person name="Schnabel D."/>
            <person name="Desnick R.J."/>
            <person name="Schuchman E.H."/>
            <person name="Sandhoff K."/>
        </authorList>
    </citation>
    <scope>NUCLEOTIDE SEQUENCE [MRNA] (ISOFORM 1)</scope>
    <scope>PARTIAL PROTEIN SEQUENCE</scope>
    <scope>VARIANT FRBRL LYS-222</scope>
    <scope>VARIANTS MET-72; VAL-93 AND ALA-246</scope>
    <scope>GLYCOSYLATION</scope>
    <scope>CATALYTIC ACTIVITY</scope>
    <source>
        <tissue>Fibroblast</tissue>
        <tissue>Pituitary</tissue>
        <tissue>Urine</tissue>
    </source>
</reference>
<reference key="2">
    <citation type="journal article" date="1995" name="Mol. Biol. Cell">
        <title>A new gene family predicted by a novel human heart cDNA.</title>
        <authorList>
            <person name="Churchill J.R."/>
            <person name="Wieland S.J."/>
            <person name="Hoffman S."/>
            <person name="Gallin E.K."/>
            <person name="Murphy P.M."/>
        </authorList>
    </citation>
    <scope>NUCLEOTIDE SEQUENCE [MRNA] (ISOFORM 1)</scope>
    <scope>VARIANTS MET-72; VAL-93 AND ALA-246</scope>
</reference>
<reference key="3">
    <citation type="submission" date="1998-11" db="EMBL/GenBank/DDBJ databases">
        <authorList>
            <person name="Wieland S.J."/>
            <person name="Hoffman S."/>
            <person name="Churchill J.R."/>
            <person name="Gallin E.K."/>
            <person name="Murphy P.M."/>
        </authorList>
    </citation>
    <scope>SEQUENCE REVISION</scope>
</reference>
<reference key="4">
    <citation type="submission" date="2003-05" db="EMBL/GenBank/DDBJ databases">
        <title>A new spermatogenesis related gene.</title>
        <authorList>
            <person name="Fan M.M."/>
            <person name="Miao S.Y."/>
            <person name="Zhang X.D."/>
            <person name="Qiao Y."/>
            <person name="Liang G."/>
            <person name="Wang L.F."/>
        </authorList>
    </citation>
    <scope>NUCLEOTIDE SEQUENCE [LARGE SCALE MRNA] (ISOFORM 2)</scope>
    <source>
        <tissue>Testis</tissue>
    </source>
</reference>
<reference key="5">
    <citation type="journal article" date="2000" name="Mol. Genet. Metab.">
        <title>Human acid ceramidase gene: novel mutations in Farber disease.</title>
        <authorList>
            <person name="Zhang Z."/>
            <person name="Mandal A.K."/>
            <person name="Mital A."/>
            <person name="Popescu N."/>
            <person name="Zimonjic D."/>
            <person name="Moser A."/>
            <person name="Moser H."/>
            <person name="Mukherjee A.B."/>
        </authorList>
    </citation>
    <scope>NUCLEOTIDE SEQUENCE [GENOMIC DNA]</scope>
    <scope>VARIANTS FRBRL HIS-22; ASP-23; VAL-138; LYS-222 AND ASP-320</scope>
    <scope>VARIANTS MET-72; VAL-93 AND ALA-246</scope>
</reference>
<reference key="6">
    <citation type="journal article" date="1999" name="Genomics">
        <title>The human acid ceramidase gene (ASAH): structure, chromosomal location, mutation analysis, and expression.</title>
        <authorList>
            <person name="Li C.M."/>
            <person name="Park J.H."/>
            <person name="He X."/>
            <person name="Levy B."/>
            <person name="Chen F."/>
            <person name="Arai K."/>
            <person name="Adler D.A."/>
            <person name="Disteche C.M."/>
            <person name="Koch J."/>
            <person name="Sandhoff K."/>
            <person name="Schuchman E.H."/>
        </authorList>
    </citation>
    <scope>NUCLEOTIDE SEQUENCE [GENOMIC DNA]</scope>
    <scope>FUNCTION</scope>
    <scope>CATALYTIC ACTIVITY</scope>
    <scope>PATHWAY</scope>
    <scope>VARIANTS FRBRL VAL-138; GLY-254 AND ARG-362</scope>
    <scope>CHARACTERIZATION OF VARIANTS FRBRL VAL-138; GLY-254 AND ARG-362</scope>
    <scope>TISSUE SPECIFICITY</scope>
</reference>
<reference key="7">
    <citation type="journal article" date="2006" name="Nature">
        <title>DNA sequence and analysis of human chromosome 8.</title>
        <authorList>
            <person name="Nusbaum C."/>
            <person name="Mikkelsen T.S."/>
            <person name="Zody M.C."/>
            <person name="Asakawa S."/>
            <person name="Taudien S."/>
            <person name="Garber M."/>
            <person name="Kodira C.D."/>
            <person name="Schueler M.G."/>
            <person name="Shimizu A."/>
            <person name="Whittaker C.A."/>
            <person name="Chang J.L."/>
            <person name="Cuomo C.A."/>
            <person name="Dewar K."/>
            <person name="FitzGerald M.G."/>
            <person name="Yang X."/>
            <person name="Allen N.R."/>
            <person name="Anderson S."/>
            <person name="Asakawa T."/>
            <person name="Blechschmidt K."/>
            <person name="Bloom T."/>
            <person name="Borowsky M.L."/>
            <person name="Butler J."/>
            <person name="Cook A."/>
            <person name="Corum B."/>
            <person name="DeArellano K."/>
            <person name="DeCaprio D."/>
            <person name="Dooley K.T."/>
            <person name="Dorris L. III"/>
            <person name="Engels R."/>
            <person name="Gloeckner G."/>
            <person name="Hafez N."/>
            <person name="Hagopian D.S."/>
            <person name="Hall J.L."/>
            <person name="Ishikawa S.K."/>
            <person name="Jaffe D.B."/>
            <person name="Kamat A."/>
            <person name="Kudoh J."/>
            <person name="Lehmann R."/>
            <person name="Lokitsang T."/>
            <person name="Macdonald P."/>
            <person name="Major J.E."/>
            <person name="Matthews C.D."/>
            <person name="Mauceli E."/>
            <person name="Menzel U."/>
            <person name="Mihalev A.H."/>
            <person name="Minoshima S."/>
            <person name="Murayama Y."/>
            <person name="Naylor J.W."/>
            <person name="Nicol R."/>
            <person name="Nguyen C."/>
            <person name="O'Leary S.B."/>
            <person name="O'Neill K."/>
            <person name="Parker S.C.J."/>
            <person name="Polley A."/>
            <person name="Raymond C.K."/>
            <person name="Reichwald K."/>
            <person name="Rodriguez J."/>
            <person name="Sasaki T."/>
            <person name="Schilhabel M."/>
            <person name="Siddiqui R."/>
            <person name="Smith C.L."/>
            <person name="Sneddon T.P."/>
            <person name="Talamas J.A."/>
            <person name="Tenzin P."/>
            <person name="Topham K."/>
            <person name="Venkataraman V."/>
            <person name="Wen G."/>
            <person name="Yamazaki S."/>
            <person name="Young S.K."/>
            <person name="Zeng Q."/>
            <person name="Zimmer A.R."/>
            <person name="Rosenthal A."/>
            <person name="Birren B.W."/>
            <person name="Platzer M."/>
            <person name="Shimizu N."/>
            <person name="Lander E.S."/>
        </authorList>
    </citation>
    <scope>NUCLEOTIDE SEQUENCE [LARGE SCALE GENOMIC DNA]</scope>
</reference>
<reference key="8">
    <citation type="journal article" date="2004" name="Genome Res.">
        <title>The status, quality, and expansion of the NIH full-length cDNA project: the Mammalian Gene Collection (MGC).</title>
        <authorList>
            <consortium name="The MGC Project Team"/>
        </authorList>
    </citation>
    <scope>NUCLEOTIDE SEQUENCE [LARGE SCALE MRNA] (ISOFORMS 1 AND 3)</scope>
    <scope>VARIANTS MET-72; VAL-93 AND ALA-246</scope>
    <source>
        <tissue>Bone marrow</tissue>
        <tissue>Skin</tissue>
    </source>
</reference>
<reference key="9">
    <citation type="journal article" date="1994" name="J. Biochem.">
        <title>The synthetic pathway for glucosylsphingosine in cultured fibroblasts.</title>
        <authorList>
            <person name="Yamaguchi Y."/>
            <person name="Sasagasako N."/>
            <person name="Goto I."/>
            <person name="Kobayashi T."/>
        </authorList>
    </citation>
    <scope>FUNCTION</scope>
</reference>
<reference key="10">
    <citation type="journal article" date="1995" name="J. Biol. Chem.">
        <title>Purification, characterization, and biosynthesis of human acid ceramidase.</title>
        <authorList>
            <person name="Bernardo K."/>
            <person name="Hurwitz R."/>
            <person name="Zenk T."/>
            <person name="Desnick R.J."/>
            <person name="Ferlinz K."/>
            <person name="Schuchman E.H."/>
            <person name="Sandhoff K."/>
        </authorList>
    </citation>
    <scope>FUNCTION</scope>
    <scope>CATALYTIC ACTIVITY</scope>
    <scope>BIOPHYSICOCHEMICAL PROPERTIES</scope>
    <scope>PATHWAY</scope>
    <scope>SUBUNIT</scope>
    <scope>SUBCELLULAR LOCATION</scope>
    <scope>PTM</scope>
</reference>
<reference key="11">
    <citation type="journal article" date="2001" name="J. Biol. Chem.">
        <title>Human acid ceramidase: processing, glycosylation, and lysosomal targeting.</title>
        <authorList>
            <person name="Ferlinz K."/>
            <person name="Kopal G."/>
            <person name="Bernardo K."/>
            <person name="Linke T."/>
            <person name="Bar J."/>
            <person name="Breiden B."/>
            <person name="Neumann U."/>
            <person name="Lang F."/>
            <person name="Schuchman E.H."/>
            <person name="Sandhoff K."/>
        </authorList>
    </citation>
    <scope>FUNCTION</scope>
    <scope>CATALYTIC ACTIVITY</scope>
    <scope>SUBUNIT</scope>
    <scope>SUBCELLULAR LOCATION</scope>
    <scope>PTM</scope>
    <scope>GLYCOSYLATION</scope>
    <scope>MUTAGENESIS OF ASN-173; ASN-195; ASN-259; ASN-286; ASN-342 AND ASN-348</scope>
</reference>
<reference key="12">
    <citation type="journal article" date="2003" name="J. Biol. Chem.">
        <title>The reverse activity of human acid ceramidase.</title>
        <authorList>
            <person name="Okino N."/>
            <person name="He X."/>
            <person name="Gatt S."/>
            <person name="Sandhoff K."/>
            <person name="Ito M."/>
            <person name="Schuchman E.H."/>
        </authorList>
    </citation>
    <scope>FUNCTION</scope>
    <scope>SUBSTRATE SPECIFICITY</scope>
    <scope>CATALYTIC ACTIVITY</scope>
    <scope>ACTIVITY REGULATION</scope>
    <scope>BIOPHYSICOCHEMICAL PROPERTIES</scope>
    <scope>SUBCELLULAR LOCATION</scope>
</reference>
<reference key="13">
    <citation type="journal article" date="2003" name="J. Biol. Chem.">
        <title>Purification and characterization of recombinant, human acid ceramidase. Catalytic reactions and interactions with acid sphingomyelinase.</title>
        <authorList>
            <person name="He X."/>
            <person name="Okino N."/>
            <person name="Dhami R."/>
            <person name="Dagan A."/>
            <person name="Gatt S."/>
            <person name="Schulze H."/>
            <person name="Sandhoff K."/>
            <person name="Schuchman E.H."/>
        </authorList>
    </citation>
    <scope>FUNCTION</scope>
    <scope>CATALYTIC ACTIVITY</scope>
    <scope>BIOPHYSICOCHEMICAL PROPERTIES</scope>
    <scope>PTM</scope>
</reference>
<reference key="14">
    <citation type="journal article" date="2003" name="Nat. Biotechnol.">
        <title>Identification and quantification of N-linked glycoproteins using hydrazide chemistry, stable isotope labeling and mass spectrometry.</title>
        <authorList>
            <person name="Zhang H."/>
            <person name="Li X.-J."/>
            <person name="Martin D.B."/>
            <person name="Aebersold R."/>
        </authorList>
    </citation>
    <scope>GLYCOSYLATION AT ASN-259 AND ASN-286</scope>
</reference>
<reference key="15">
    <citation type="journal article" date="2005" name="J. Biol. Chem.">
        <title>Molecular characterization of N-acylethanolamine-hydrolyzing acid amidase, a novel member of the choloylglycine hydrolase family with structural and functional similarity to acid ceramidase.</title>
        <authorList>
            <person name="Tsuboi K."/>
            <person name="Sun Y.-X."/>
            <person name="Okamoto Y."/>
            <person name="Araki N."/>
            <person name="Tonai T."/>
            <person name="Ueda N."/>
        </authorList>
    </citation>
    <scope>FUNCTION</scope>
    <scope>CATALYTIC ACTIVITY</scope>
    <scope>BIOPHYSICOCHEMICAL PROPERTIES</scope>
</reference>
<reference key="16">
    <citation type="journal article" date="2005" name="J. Proteome Res.">
        <title>Human plasma N-glycoproteome analysis by immunoaffinity subtraction, hydrazide chemistry, and mass spectrometry.</title>
        <authorList>
            <person name="Liu T."/>
            <person name="Qian W.-J."/>
            <person name="Gritsenko M.A."/>
            <person name="Camp D.G. II"/>
            <person name="Monroe M.E."/>
            <person name="Moore R.J."/>
            <person name="Smith R.D."/>
        </authorList>
    </citation>
    <scope>GLYCOSYLATION [LARGE SCALE ANALYSIS] AT ASN-259</scope>
    <source>
        <tissue>Plasma</tissue>
    </source>
</reference>
<reference key="17">
    <citation type="journal article" date="2006" name="Mol. Cell. Proteomics">
        <title>Elucidation of N-glycosylation sites on human platelet proteins: a glycoproteomic approach.</title>
        <authorList>
            <person name="Lewandrowski U."/>
            <person name="Moebius J."/>
            <person name="Walter U."/>
            <person name="Sickmann A."/>
        </authorList>
    </citation>
    <scope>GLYCOSYLATION [LARGE SCALE ANALYSIS] AT ASN-259</scope>
    <source>
        <tissue>Platelet</tissue>
    </source>
</reference>
<reference key="18">
    <citation type="journal article" date="2008" name="J. Invest. Dermatol.">
        <title>Upregulation of the human alkaline ceramidase 1 and acid ceramidase mediates calcium-induced differentiation of epidermal keratinocytes.</title>
        <authorList>
            <person name="Sun W."/>
            <person name="Xu R."/>
            <person name="Hu W."/>
            <person name="Jin J."/>
            <person name="Crellin H.A."/>
            <person name="Bielawski J."/>
            <person name="Szulc Z.M."/>
            <person name="Thiers B.H."/>
            <person name="Obeid L.M."/>
            <person name="Mao C."/>
        </authorList>
    </citation>
    <scope>FUNCTION</scope>
    <scope>INDUCTION BY CALCIUM</scope>
</reference>
<reference key="19">
    <citation type="journal article" date="2009" name="J. Proteome Res.">
        <title>Glycoproteomics analysis of human liver tissue by combination of multiple enzyme digestion and hydrazide chemistry.</title>
        <authorList>
            <person name="Chen R."/>
            <person name="Jiang X."/>
            <person name="Sun D."/>
            <person name="Han G."/>
            <person name="Wang F."/>
            <person name="Ye M."/>
            <person name="Wang L."/>
            <person name="Zou H."/>
        </authorList>
    </citation>
    <scope>GLYCOSYLATION [LARGE SCALE ANALYSIS] AT ASN-259 AND ASN-286</scope>
    <source>
        <tissue>Liver</tissue>
    </source>
</reference>
<reference key="20">
    <citation type="journal article" date="2011" name="BMC Syst. Biol.">
        <title>Initial characterization of the human central proteome.</title>
        <authorList>
            <person name="Burkard T.R."/>
            <person name="Planyavsky M."/>
            <person name="Kaupe I."/>
            <person name="Breitwieser F.P."/>
            <person name="Buerckstuemmer T."/>
            <person name="Bennett K.L."/>
            <person name="Superti-Furga G."/>
            <person name="Colinge J."/>
        </authorList>
    </citation>
    <scope>IDENTIFICATION BY MASS SPECTROMETRY [LARGE SCALE ANALYSIS]</scope>
</reference>
<reference key="21">
    <citation type="journal article" date="2012" name="Mol. Cell. Biol.">
        <title>Acid ceramidase (ASAH1) represses steroidogenic factor 1-dependent gene transcription in H295R human adrenocortical cells by binding to the receptor.</title>
        <authorList>
            <person name="Lucki N.C."/>
            <person name="Li D."/>
            <person name="Bandyopadhyay S."/>
            <person name="Wang E."/>
            <person name="Merrill A.H."/>
            <person name="Sewer M.B."/>
        </authorList>
    </citation>
    <scope>FUNCTION (ISOFORM 2)</scope>
    <scope>INTERACTION WITH NR5A1 (ISOFORM 2)</scope>
    <scope>SUBCELLULAR LOCATION (ISOFORM 2)</scope>
    <scope>MUTAGENESIS (ISOFORM 2)</scope>
</reference>
<reference key="22">
    <citation type="journal article" date="2012" name="Mol. Endocrinol.">
        <title>Acid ceramidase (ASAH1) is a global regulator of steroidogenic capacity and adrenocortical gene expression.</title>
        <authorList>
            <person name="Lucki N.C."/>
            <person name="Bandyopadhyay S."/>
            <person name="Wang E."/>
            <person name="Merrill A.H."/>
            <person name="Sewer M.B."/>
        </authorList>
    </citation>
    <scope>FUNCTION</scope>
</reference>
<reference key="23">
    <citation type="journal article" date="2016" name="FEBS Lett.">
        <title>Lysosomal glycosphingolipid catabolism by acid ceramidase: formation of glycosphingoid bases during deficiency of glycosidases.</title>
        <authorList>
            <person name="Ferraz M.J."/>
            <person name="Marques A.R."/>
            <person name="Appelman M.D."/>
            <person name="Verhoek M."/>
            <person name="Strijland A."/>
            <person name="Mirzaian M."/>
            <person name="Scheij S."/>
            <person name="Ouairy C.M."/>
            <person name="Lahav D."/>
            <person name="Wisse P."/>
            <person name="Overkleeft H.S."/>
            <person name="Boot R.G."/>
            <person name="Aerts J.M."/>
        </authorList>
    </citation>
    <scope>FUNCTION</scope>
    <scope>CATALYTIC ACTIVITY</scope>
</reference>
<reference key="24">
    <citation type="journal article" date="2023" name="Hum. Mol. Genet.">
        <title>Acid ceramidase involved in pathogenic cascade leading to accumulation of alpha-synuclein in iPSC model of GBA1-associated Parkinson's disease.</title>
        <authorList>
            <person name="Kumar M."/>
            <person name="Srikanth M.P."/>
            <person name="Deleidi M."/>
            <person name="Hallett P.J."/>
            <person name="Isacson O."/>
            <person name="Feldman R.A."/>
        </authorList>
    </citation>
    <scope>FUNCTION</scope>
</reference>
<reference key="25">
    <citation type="journal article" date="2014" name="J. Proteomics">
        <title>An enzyme assisted RP-RPLC approach for in-depth analysis of human liver phosphoproteome.</title>
        <authorList>
            <person name="Bian Y."/>
            <person name="Song C."/>
            <person name="Cheng K."/>
            <person name="Dong M."/>
            <person name="Wang F."/>
            <person name="Huang J."/>
            <person name="Sun D."/>
            <person name="Wang L."/>
            <person name="Ye M."/>
            <person name="Zou H."/>
        </authorList>
    </citation>
    <scope>IDENTIFICATION BY MASS SPECTROMETRY [LARGE SCALE ANALYSIS]</scope>
    <source>
        <tissue>Liver</tissue>
    </source>
</reference>
<reference key="26">
    <citation type="journal article" date="2015" name="Proteomics">
        <title>N-terminome analysis of the human mitochondrial proteome.</title>
        <authorList>
            <person name="Vaca Jacome A.S."/>
            <person name="Rabilloud T."/>
            <person name="Schaeffer-Reiss C."/>
            <person name="Rompais M."/>
            <person name="Ayoub D."/>
            <person name="Lane L."/>
            <person name="Bairoch A."/>
            <person name="Van Dorsselaer A."/>
            <person name="Carapito C."/>
        </authorList>
    </citation>
    <scope>IDENTIFICATION BY MASS SPECTROMETRY [LARGE SCALE ANALYSIS]</scope>
</reference>
<reference evidence="54" key="27">
    <citation type="journal article" date="2019" name="J. Med. Chem.">
        <title>Molecular mechanism of inhibition of acid ceramidase by carmofur.</title>
        <authorList>
            <person name="Dementiev A."/>
            <person name="Joachimiak A."/>
            <person name="Nguyen H."/>
            <person name="Gorelik A."/>
            <person name="Illes K."/>
            <person name="Shabani S."/>
            <person name="Gelsomino M."/>
            <person name="Ahn E.E."/>
            <person name="Nagar B."/>
            <person name="Doan N."/>
        </authorList>
    </citation>
    <scope>X-RAY CRYSTALLOGRAPHY (2.74 ANGSTROMS) OF 22-395 IN COMPLEX WITH SYNTHETIC INHIBITOR</scope>
    <scope>ACTIVE SITE</scope>
    <scope>GLYCOSYLATION AT ASN-173; ASN-259 AND ASN-286</scope>
    <scope>SUBUNIT</scope>
    <scope>PROTEOLYTIC CLEAVAGE</scope>
    <scope>DISULFIDE BOND</scope>
</reference>
<reference evidence="53" key="28">
    <citation type="journal article" date="2018" name="Nat. Commun.">
        <title>Structural basis for the activation of acid ceramidase.</title>
        <authorList>
            <person name="Gebai A."/>
            <person name="Gorelik A."/>
            <person name="Li Z."/>
            <person name="Illes K."/>
            <person name="Nagar B."/>
        </authorList>
    </citation>
    <scope>X-RAY CRYSTALLOGRAPHY (2.50 ANGSTROMS) OF 22-395</scope>
    <scope>CATALYTIC ACTIVITY</scope>
    <scope>ACTIVE SITE</scope>
    <scope>GLYCOSYLATION AT ASN-173; ASN-259; ASN-286 AND ASN-342</scope>
    <scope>SUBUNIT</scope>
    <scope>PROTEOLYTIC CLEAVAGE</scope>
    <scope>DISULFIDE BOND</scope>
    <scope>MUTAGENESIS OF LEU-80; THR-141; CYS-143; ARG-159; ASP-162; 165-VAL--LEU-167; 169-TRP--ILE-171; TRP-176; ASN-320; 328-PHE--LEU-330 AND ARG-333</scope>
</reference>
<reference key="29">
    <citation type="journal article" date="2001" name="Hum. Mutat.">
        <title>Molecular analysis of acid ceramidase deficiency in patients with Farber disease.</title>
        <authorList>
            <person name="Bar J."/>
            <person name="Linke T."/>
            <person name="Ferlinz K."/>
            <person name="Neumann U."/>
            <person name="Schuchman E.H."/>
            <person name="Sandhoff K."/>
        </authorList>
    </citation>
    <scope>VARIANTS FRBRL CYS-36 AND ASP-320</scope>
</reference>
<reference key="30">
    <citation type="journal article" date="2002" name="J. Inherit. Metab. Dis.">
        <title>Mutation analysis of the acid ceramidase gene in Japanese patients with Farber disease.</title>
        <authorList>
            <person name="Muramatsu T."/>
            <person name="Sakai N."/>
            <person name="Yanagihara L."/>
            <person name="Yamada M."/>
            <person name="Nishigaki T."/>
            <person name="Kokubu C."/>
            <person name="Tsukamoto H."/>
            <person name="Ito M."/>
            <person name="Inui K."/>
        </authorList>
    </citation>
    <scope>VARIANTS FRBRL VAL-96 DEL; GLU-97 AND ARG-235</scope>
    <scope>CHARACTERIZATION OF VARIANTS FRBRL VAL-96 DEL; GLU-97 AND ARG-235</scope>
    <scope>VARIANT ILE-369</scope>
    <scope>CATALYTIC ACTIVITY</scope>
</reference>
<reference key="31">
    <citation type="journal article" date="2006" name="J. Hum. Genet.">
        <title>Farber lipogranulomatosis: clinical and molecular genetic analysis reveals a novel mutation in an Indian family.</title>
        <authorList>
            <person name="Devi A.R.R."/>
            <person name="Gopikrishna M."/>
            <person name="Ratheesh R."/>
            <person name="Savithri G."/>
            <person name="Swarnalata G."/>
            <person name="Bashyam M."/>
        </authorList>
    </citation>
    <scope>VARIANT FRBRL VAL-182</scope>
</reference>
<reference key="32">
    <citation type="journal article" date="2011" name="Eur. J. Paediatr. Neurol.">
        <title>Farber lipogranulomatosis type 1--late presentation and early death in a Croatian boy with a novel homozygous ASAH1 mutation.</title>
        <authorList>
            <person name="Cvitanovic-Sojat L."/>
            <person name="Gjergja Juraski R."/>
            <person name="Sabourdy F."/>
            <person name="Fensom A.H."/>
            <person name="Fumic K."/>
            <person name="Paschke E."/>
            <person name="Levade T."/>
        </authorList>
    </citation>
    <scope>VARIANT FRBRL TRP-168</scope>
</reference>
<reference key="33">
    <citation type="journal article" date="2012" name="Am. J. Hum. Genet.">
        <title>Spinal muscular atrophy associated with progressive myoclonic epilepsy is caused by mutations in ASAH1.</title>
        <authorList>
            <person name="Zhou J."/>
            <person name="Tawk M."/>
            <person name="Tiziano F.D."/>
            <person name="Veillet J."/>
            <person name="Bayes M."/>
            <person name="Nolent F."/>
            <person name="Garcia V."/>
            <person name="Servidei S."/>
            <person name="Bertini E."/>
            <person name="Castro-Giner F."/>
            <person name="Renda Y."/>
            <person name="Carpentier S."/>
            <person name="Andrieu-Abadie N."/>
            <person name="Gut I."/>
            <person name="Levade T."/>
            <person name="Topaloglu H."/>
            <person name="Melki J."/>
        </authorList>
    </citation>
    <scope>VARIANT SMAPME MET-42</scope>
    <scope>CHARACTERIZATION OF VARIANT SMAPME MET-42</scope>
    <scope>CATALYTIC ACTIVITY</scope>
</reference>
<reference key="34">
    <citation type="journal article" date="2012" name="Brain Dev.">
        <title>Novel V97G ASAH1 mutation found in Farber disease patients: unique appearance of the disease with an intermediate severity, and marked early involvement of central and peripheral nervous system.</title>
        <authorList>
            <person name="Chedrawi A.K."/>
            <person name="Al-Hassnan Z.N."/>
            <person name="Al-Muhaizea M."/>
            <person name="Colak D."/>
            <person name="Al-Younes B."/>
            <person name="Albakheet A."/>
            <person name="Tulba S."/>
            <person name="Kaya N."/>
        </authorList>
    </citation>
    <scope>VARIANT FRBRL GLY-97</scope>
</reference>
<reference key="35">
    <citation type="journal article" date="2012" name="Brain Dev.">
        <title>A novel mutation in an atypical presentation of the rare infantile Farber disease.</title>
        <authorList>
            <person name="Al Jasmi F."/>
        </authorList>
    </citation>
    <scope>VARIANTS FRBRL ARG-185 AND GLN-382 (ISOFORM 2)</scope>
</reference>
<reference key="36">
    <citation type="journal article" date="2014" name="Clin. Genet.">
        <title>Evidence for clinical, genetic and biochemical variability in spinal muscular atrophy with progressive myoclonic epilepsy.</title>
        <authorList>
            <consortium name="FORGE Canada Consortium"/>
            <person name="Dyment D.A."/>
            <person name="Sell E."/>
            <person name="Vanstone M.R."/>
            <person name="Smith A.C."/>
            <person name="Garandeau D."/>
            <person name="Garcia V."/>
            <person name="Carpentier S."/>
            <person name="Le Trionnaire E."/>
            <person name="Sabourdy F."/>
            <person name="Beaulieu C.L."/>
            <person name="Schwartzentruber J.A."/>
            <person name="McMillan H.J."/>
            <person name="Majewski J."/>
            <person name="Bulman D.E."/>
            <person name="Levade T."/>
            <person name="Boycott K.M."/>
        </authorList>
    </citation>
    <scope>VARIANTS SMAPME ASN-152 AND 284-GLY--TRP-395 DEL</scope>
</reference>
<reference key="37">
    <citation type="journal article" date="2016" name="Am. J. Med. Genet. A">
        <title>Atypical presentation of infantile-onset farber disease with novel ASAH1 mutations.</title>
        <authorList>
            <person name="Kim S.Y."/>
            <person name="Choi S.A."/>
            <person name="Lee S."/>
            <person name="Lee J.S."/>
            <person name="Hong C.R."/>
            <person name="Lim B.C."/>
            <person name="Kang H.J."/>
            <person name="Kim K.J."/>
            <person name="Park S.H."/>
            <person name="Choi M."/>
            <person name="Chae J.H."/>
        </authorList>
    </citation>
    <scope>VARIANTS FRBRL ARG-235 AND CYS-333</scope>
</reference>
<reference key="38">
    <citation type="journal article" date="2016" name="Arthritis Rheum.">
        <title>Brief Report: Peripheral Osteolysis in Adults Linked to ASAH1 (Acid Ceramidase) Mutations: A New Presentation of Farber's Disease.</title>
        <authorList>
            <person name="Bonafe L."/>
            <person name="Kariminejad A."/>
            <person name="Li J."/>
            <person name="Royer-Bertrand B."/>
            <person name="Garcia V."/>
            <person name="Mahdavi S."/>
            <person name="Bozorgmehr B."/>
            <person name="Lachman R.L."/>
            <person name="Mittaz-Crettol L."/>
            <person name="Campos-Xavier B."/>
            <person name="Nampoothiri S."/>
            <person name="Unger S."/>
            <person name="Rivolta C."/>
            <person name="Levade T."/>
            <person name="Superti-Furga A."/>
        </authorList>
    </citation>
    <scope>VARIANTS FRBRL ARG-169 AND GLY-254</scope>
</reference>
<reference key="39">
    <citation type="journal article" date="2016" name="Eur. J. Hum. Genet.">
        <title>ASAH1 variant causing a mild SMA phenotype with no myoclonic epilepsy: a clinical, biochemical and molecular study.</title>
        <authorList>
            <person name="Filosto M."/>
            <person name="Aureli M."/>
            <person name="Castellotti B."/>
            <person name="Rinaldi F."/>
            <person name="Schiumarini D."/>
            <person name="Valsecchi M."/>
            <person name="Lualdi S."/>
            <person name="Mazzotti R."/>
            <person name="Pensato V."/>
            <person name="Rota S."/>
            <person name="Gellera C."/>
            <person name="Filocamo M."/>
            <person name="Padovani A."/>
        </authorList>
    </citation>
    <scope>VARIANT SMAPME ALA-42</scope>
    <scope>CHARACTERIZATION OF VARIANT SMAPME ALA-42</scope>
    <scope>CATALYTIC ACTIVITY</scope>
</reference>
<reference key="40">
    <citation type="journal article" date="2021" name="Am. J. Hum. Genet.">
        <title>Progressive myoclonus epilepsies-Residual unsolved cases have marked genetic heterogeneity including dolichol-dependent protein glycosylation pathway genes.</title>
        <authorList>
            <person name="Courage C."/>
            <person name="Oliver K.L."/>
            <person name="Park E.J."/>
            <person name="Cameron J.M."/>
            <person name="Grabinska K.A."/>
            <person name="Muona M."/>
            <person name="Canafoglia L."/>
            <person name="Gambardella A."/>
            <person name="Said E."/>
            <person name="Afawi Z."/>
            <person name="Baykan B."/>
            <person name="Brandt C."/>
            <person name="di Bonaventura C."/>
            <person name="Chew H.B."/>
            <person name="Criscuolo C."/>
            <person name="Dibbens L.M."/>
            <person name="Castellotti B."/>
            <person name="Riguzzi P."/>
            <person name="Labate A."/>
            <person name="Filla A."/>
            <person name="Giallonardo A.T."/>
            <person name="Berecki G."/>
            <person name="Jackson C.B."/>
            <person name="Joensuu T."/>
            <person name="Damiano J.A."/>
            <person name="Kivity S."/>
            <person name="Korczyn A."/>
            <person name="Palotie A."/>
            <person name="Striano P."/>
            <person name="Uccellini D."/>
            <person name="Giuliano L."/>
            <person name="Andermann E."/>
            <person name="Scheffer I.E."/>
            <person name="Michelucci R."/>
            <person name="Bahlo M."/>
            <person name="Franceschetti S."/>
            <person name="Sessa W.C."/>
            <person name="Berkovic S.F."/>
            <person name="Lehesjoki A.E."/>
        </authorList>
    </citation>
    <scope>VARIANT SMAPME ASN-152</scope>
</reference>
<protein>
    <recommendedName>
        <fullName evidence="39 42 44">Acid ceramidase</fullName>
        <shortName>AC</shortName>
        <shortName evidence="40">ACDase</shortName>
        <shortName>Acid CDase</shortName>
        <ecNumber evidence="3 6 10 12 29 33 35">3.5.1.23</ecNumber>
    </recommendedName>
    <alternativeName>
        <fullName>Acylsphingosine deacylase</fullName>
    </alternativeName>
    <alternativeName>
        <fullName>Glycosylceramide deacylase</fullName>
        <ecNumber evidence="25 34">3.5.1.109</ecNumber>
    </alternativeName>
    <alternativeName>
        <fullName evidence="48">N-acylethanolamine hydrolase ASAH1</fullName>
        <ecNumber evidence="12">3.5.1.-</ecNumber>
    </alternativeName>
    <alternativeName>
        <fullName>N-acylsphingosine amidohydrolase</fullName>
    </alternativeName>
    <alternativeName>
        <fullName>Putative 32 kDa heart protein</fullName>
        <shortName>PHP32</shortName>
    </alternativeName>
    <component>
        <recommendedName>
            <fullName evidence="41">Acid ceramidase subunit alpha</fullName>
        </recommendedName>
    </component>
    <component>
        <recommendedName>
            <fullName evidence="41">Acid ceramidase subunit beta</fullName>
        </recommendedName>
    </component>
</protein>
<gene>
    <name evidence="52" type="primary">ASAH1</name>
    <name type="synonym">ASAH</name>
    <name type="ORF">HSD-33</name>
    <name type="ORF">HSD33</name>
</gene>